<dbReference type="EC" id="2.7.11.24" evidence="7 8 12 15 20 21 22"/>
<dbReference type="EMBL" id="L31951">
    <property type="protein sequence ID" value="AAA56831.1"/>
    <property type="molecule type" value="mRNA"/>
</dbReference>
<dbReference type="EMBL" id="U09759">
    <property type="protein sequence ID" value="AAA74740.1"/>
    <property type="molecule type" value="mRNA"/>
</dbReference>
<dbReference type="EMBL" id="U34821">
    <property type="protein sequence ID" value="AAC50606.1"/>
    <property type="molecule type" value="mRNA"/>
</dbReference>
<dbReference type="EMBL" id="U35002">
    <property type="protein sequence ID" value="AAC50608.1"/>
    <property type="molecule type" value="mRNA"/>
</dbReference>
<dbReference type="EMBL" id="U35003">
    <property type="protein sequence ID" value="AAC50609.1"/>
    <property type="molecule type" value="mRNA"/>
</dbReference>
<dbReference type="EMBL" id="EU927388">
    <property type="protein sequence ID" value="ACH57450.1"/>
    <property type="molecule type" value="mRNA"/>
</dbReference>
<dbReference type="EMBL" id="CR536580">
    <property type="protein sequence ID" value="CAG38817.1"/>
    <property type="molecule type" value="mRNA"/>
</dbReference>
<dbReference type="EMBL" id="AK289638">
    <property type="protein sequence ID" value="BAF82327.1"/>
    <property type="molecule type" value="mRNA"/>
</dbReference>
<dbReference type="EMBL" id="DQ066599">
    <property type="protein sequence ID" value="AAY46156.1"/>
    <property type="molecule type" value="Genomic_DNA"/>
</dbReference>
<dbReference type="EMBL" id="AB451302">
    <property type="protein sequence ID" value="BAG70116.1"/>
    <property type="molecule type" value="mRNA"/>
</dbReference>
<dbReference type="EMBL" id="AB451355">
    <property type="protein sequence ID" value="BAG70169.1"/>
    <property type="molecule type" value="mRNA"/>
</dbReference>
<dbReference type="EMBL" id="AC008610">
    <property type="status" value="NOT_ANNOTATED_CDS"/>
    <property type="molecule type" value="Genomic_DNA"/>
</dbReference>
<dbReference type="EMBL" id="AC104115">
    <property type="status" value="NOT_ANNOTATED_CDS"/>
    <property type="molecule type" value="Genomic_DNA"/>
</dbReference>
<dbReference type="EMBL" id="CH471165">
    <property type="protein sequence ID" value="EAW53759.1"/>
    <property type="molecule type" value="Genomic_DNA"/>
</dbReference>
<dbReference type="EMBL" id="CH471165">
    <property type="protein sequence ID" value="EAW53757.1"/>
    <property type="molecule type" value="Genomic_DNA"/>
</dbReference>
<dbReference type="EMBL" id="CH471165">
    <property type="protein sequence ID" value="EAW53758.1"/>
    <property type="molecule type" value="Genomic_DNA"/>
</dbReference>
<dbReference type="EMBL" id="CH471165">
    <property type="protein sequence ID" value="EAW53762.1"/>
    <property type="molecule type" value="Genomic_DNA"/>
</dbReference>
<dbReference type="EMBL" id="BC032539">
    <property type="protein sequence ID" value="AAH32539.1"/>
    <property type="molecule type" value="mRNA"/>
</dbReference>
<dbReference type="CCDS" id="CCDS43409.1">
    <molecule id="P45984-2"/>
</dbReference>
<dbReference type="CCDS" id="CCDS43410.1">
    <molecule id="P45984-3"/>
</dbReference>
<dbReference type="CCDS" id="CCDS4453.1">
    <molecule id="P45984-1"/>
</dbReference>
<dbReference type="CCDS" id="CCDS4454.1">
    <molecule id="P45984-4"/>
</dbReference>
<dbReference type="CCDS" id="CCDS47356.1">
    <molecule id="P45984-5"/>
</dbReference>
<dbReference type="PIR" id="A55480">
    <property type="entry name" value="A55480"/>
</dbReference>
<dbReference type="PIR" id="S71102">
    <property type="entry name" value="S71102"/>
</dbReference>
<dbReference type="RefSeq" id="NP_001128516.1">
    <molecule id="P45984-5"/>
    <property type="nucleotide sequence ID" value="NM_001135044.2"/>
</dbReference>
<dbReference type="RefSeq" id="NP_001295173.1">
    <property type="nucleotide sequence ID" value="NM_001308244.1"/>
</dbReference>
<dbReference type="RefSeq" id="NP_001351536.1">
    <molecule id="P45984-2"/>
    <property type="nucleotide sequence ID" value="NM_001364607.2"/>
</dbReference>
<dbReference type="RefSeq" id="NP_001351537.1">
    <molecule id="P45984-1"/>
    <property type="nucleotide sequence ID" value="NM_001364608.2"/>
</dbReference>
<dbReference type="RefSeq" id="NP_001351538.1">
    <molecule id="P45984-4"/>
    <property type="nucleotide sequence ID" value="NM_001364609.2"/>
</dbReference>
<dbReference type="RefSeq" id="NP_001351539.1">
    <molecule id="P45984-5"/>
    <property type="nucleotide sequence ID" value="NM_001364610.2"/>
</dbReference>
<dbReference type="RefSeq" id="NP_002743.3">
    <molecule id="P45984-1"/>
    <property type="nucleotide sequence ID" value="NM_002752.4"/>
</dbReference>
<dbReference type="RefSeq" id="NP_620707.1">
    <molecule id="P45984-2"/>
    <property type="nucleotide sequence ID" value="NM_139068.3"/>
</dbReference>
<dbReference type="RefSeq" id="NP_620708.1">
    <molecule id="P45984-3"/>
    <property type="nucleotide sequence ID" value="NM_139069.3"/>
</dbReference>
<dbReference type="RefSeq" id="NP_620709.1">
    <molecule id="P45984-4"/>
    <property type="nucleotide sequence ID" value="NM_139070.3"/>
</dbReference>
<dbReference type="RefSeq" id="XP_006714954.1">
    <property type="nucleotide sequence ID" value="XM_006714891.2"/>
</dbReference>
<dbReference type="RefSeq" id="XP_016865127.1">
    <property type="nucleotide sequence ID" value="XM_017009638.1"/>
</dbReference>
<dbReference type="RefSeq" id="XP_016865130.1">
    <property type="nucleotide sequence ID" value="XM_017009641.1"/>
</dbReference>
<dbReference type="PDB" id="3E7O">
    <property type="method" value="X-ray"/>
    <property type="resolution" value="2.14 A"/>
    <property type="chains" value="A/B=7-362"/>
</dbReference>
<dbReference type="PDB" id="3NPC">
    <property type="method" value="X-ray"/>
    <property type="resolution" value="2.35 A"/>
    <property type="chains" value="A/B=1-364"/>
</dbReference>
<dbReference type="PDB" id="7CML">
    <property type="method" value="X-ray"/>
    <property type="resolution" value="2.15 A"/>
    <property type="chains" value="A/B=1-364"/>
</dbReference>
<dbReference type="PDB" id="7N8T">
    <property type="method" value="X-ray"/>
    <property type="resolution" value="1.69 A"/>
    <property type="chains" value="A=10-364"/>
</dbReference>
<dbReference type="PDB" id="8ELC">
    <property type="method" value="X-ray"/>
    <property type="resolution" value="2.07 A"/>
    <property type="chains" value="A=1-424"/>
</dbReference>
<dbReference type="PDBsum" id="3E7O"/>
<dbReference type="PDBsum" id="3NPC"/>
<dbReference type="PDBsum" id="7CML"/>
<dbReference type="PDBsum" id="7N8T"/>
<dbReference type="PDBsum" id="8ELC"/>
<dbReference type="SMR" id="P45984"/>
<dbReference type="BioGRID" id="111587">
    <property type="interactions" value="179"/>
</dbReference>
<dbReference type="DIP" id="DIP-270N"/>
<dbReference type="ELM" id="P45984"/>
<dbReference type="FunCoup" id="P45984">
    <property type="interactions" value="5816"/>
</dbReference>
<dbReference type="IntAct" id="P45984">
    <property type="interactions" value="118"/>
</dbReference>
<dbReference type="MINT" id="P45984"/>
<dbReference type="STRING" id="9606.ENSP00000394560"/>
<dbReference type="BindingDB" id="P45984"/>
<dbReference type="ChEMBL" id="CHEMBL4179"/>
<dbReference type="DrugBank" id="DB12432">
    <property type="generic name" value="CC-401"/>
</dbReference>
<dbReference type="DrugBank" id="DB05660">
    <property type="generic name" value="D-JNKI-1"/>
</dbReference>
<dbReference type="DrugBank" id="DB11718">
    <property type="generic name" value="Encorafenib"/>
</dbReference>
<dbReference type="DrugBank" id="DB12010">
    <property type="generic name" value="Fostamatinib"/>
</dbReference>
<dbReference type="DrugBank" id="DB15624">
    <property type="generic name" value="Halicin"/>
</dbReference>
<dbReference type="DrugBank" id="DB01017">
    <property type="generic name" value="Minocycline"/>
</dbReference>
<dbReference type="DrugBank" id="DB07020">
    <property type="generic name" value="N-{3-[5-(1H-1,2,4-triazol-3-yl)-1H-indazol-3-yl]phenyl}furan-2-carboxamide"/>
</dbReference>
<dbReference type="DrugBank" id="DB16995">
    <property type="generic name" value="NP-51"/>
</dbReference>
<dbReference type="DrugBank" id="DB01782">
    <property type="generic name" value="Pyrazolanthrone"/>
</dbReference>
<dbReference type="DrugBank" id="DB11798">
    <property type="generic name" value="Tanzisertib"/>
</dbReference>
<dbReference type="DrugCentral" id="P45984"/>
<dbReference type="GuidetoPHARMACOLOGY" id="1497"/>
<dbReference type="GlyConnect" id="1515">
    <property type="glycosylation" value="1 N-Linked glycan (1 site)"/>
</dbReference>
<dbReference type="GlyCosmos" id="P45984">
    <property type="glycosylation" value="1 site, 1 glycan"/>
</dbReference>
<dbReference type="GlyGen" id="P45984">
    <property type="glycosylation" value="3 sites, 1 N-linked glycan (1 site), 1 O-linked glycan (1 site)"/>
</dbReference>
<dbReference type="iPTMnet" id="P45984"/>
<dbReference type="MetOSite" id="P45984"/>
<dbReference type="PhosphoSitePlus" id="P45984"/>
<dbReference type="BioMuta" id="MAPK9"/>
<dbReference type="DMDM" id="85700366"/>
<dbReference type="REPRODUCTION-2DPAGE" id="P45984"/>
<dbReference type="CPTAC" id="CPTAC-3146"/>
<dbReference type="CPTAC" id="CPTAC-893"/>
<dbReference type="CPTAC" id="CPTAC-894"/>
<dbReference type="jPOST" id="P45984"/>
<dbReference type="MassIVE" id="P45984"/>
<dbReference type="PaxDb" id="9606-ENSP00000394560"/>
<dbReference type="PeptideAtlas" id="P45984"/>
<dbReference type="ProteomicsDB" id="55698">
    <molecule id="P45984-1"/>
</dbReference>
<dbReference type="ProteomicsDB" id="55699">
    <molecule id="P45984-2"/>
</dbReference>
<dbReference type="ProteomicsDB" id="55700">
    <molecule id="P45984-3"/>
</dbReference>
<dbReference type="ProteomicsDB" id="55701">
    <molecule id="P45984-4"/>
</dbReference>
<dbReference type="ProteomicsDB" id="55702">
    <molecule id="P45984-5"/>
</dbReference>
<dbReference type="Pumba" id="P45984"/>
<dbReference type="Antibodypedia" id="4557">
    <property type="antibodies" value="911 antibodies from 47 providers"/>
</dbReference>
<dbReference type="DNASU" id="5601"/>
<dbReference type="Ensembl" id="ENST00000343111.10">
    <molecule id="P45984-3"/>
    <property type="protein sequence ID" value="ENSP00000345524.6"/>
    <property type="gene ID" value="ENSG00000050748.18"/>
</dbReference>
<dbReference type="Ensembl" id="ENST00000393360.7">
    <molecule id="P45984-2"/>
    <property type="protein sequence ID" value="ENSP00000377028.3"/>
    <property type="gene ID" value="ENSG00000050748.18"/>
</dbReference>
<dbReference type="Ensembl" id="ENST00000425491.6">
    <molecule id="P45984-5"/>
    <property type="protein sequence ID" value="ENSP00000397422.2"/>
    <property type="gene ID" value="ENSG00000050748.18"/>
</dbReference>
<dbReference type="Ensembl" id="ENST00000452135.7">
    <molecule id="P45984-1"/>
    <property type="protein sequence ID" value="ENSP00000394560.2"/>
    <property type="gene ID" value="ENSG00000050748.18"/>
</dbReference>
<dbReference type="Ensembl" id="ENST00000455781.5">
    <molecule id="P45984-4"/>
    <property type="protein sequence ID" value="ENSP00000389338.1"/>
    <property type="gene ID" value="ENSG00000050748.18"/>
</dbReference>
<dbReference type="GeneID" id="5601"/>
<dbReference type="KEGG" id="hsa:5601"/>
<dbReference type="MANE-Select" id="ENST00000452135.7">
    <property type="protein sequence ID" value="ENSP00000394560.2"/>
    <property type="RefSeq nucleotide sequence ID" value="NM_002752.5"/>
    <property type="RefSeq protein sequence ID" value="NP_002743.3"/>
</dbReference>
<dbReference type="UCSC" id="uc003mls.5">
    <molecule id="P45984-1"/>
    <property type="organism name" value="human"/>
</dbReference>
<dbReference type="AGR" id="HGNC:6886"/>
<dbReference type="CTD" id="5601"/>
<dbReference type="DisGeNET" id="5601"/>
<dbReference type="GeneCards" id="MAPK9"/>
<dbReference type="HGNC" id="HGNC:6886">
    <property type="gene designation" value="MAPK9"/>
</dbReference>
<dbReference type="HPA" id="ENSG00000050748">
    <property type="expression patterns" value="Low tissue specificity"/>
</dbReference>
<dbReference type="MIM" id="602896">
    <property type="type" value="gene"/>
</dbReference>
<dbReference type="neXtProt" id="NX_P45984"/>
<dbReference type="OpenTargets" id="ENSG00000050748"/>
<dbReference type="PharmGKB" id="PA30630"/>
<dbReference type="VEuPathDB" id="HostDB:ENSG00000050748"/>
<dbReference type="eggNOG" id="KOG0665">
    <property type="taxonomic scope" value="Eukaryota"/>
</dbReference>
<dbReference type="GeneTree" id="ENSGT00940000158327"/>
<dbReference type="HOGENOM" id="CLU_000288_181_1_1"/>
<dbReference type="InParanoid" id="P45984"/>
<dbReference type="OMA" id="GCRNILR"/>
<dbReference type="OrthoDB" id="192887at2759"/>
<dbReference type="PAN-GO" id="P45984">
    <property type="GO annotations" value="4 GO annotations based on evolutionary models"/>
</dbReference>
<dbReference type="PhylomeDB" id="P45984"/>
<dbReference type="TreeFam" id="TF105100"/>
<dbReference type="BRENDA" id="2.7.11.24">
    <property type="organism ID" value="2681"/>
</dbReference>
<dbReference type="PathwayCommons" id="P45984"/>
<dbReference type="Reactome" id="R-HSA-2559580">
    <property type="pathway name" value="Oxidative Stress Induced Senescence"/>
</dbReference>
<dbReference type="Reactome" id="R-HSA-2871796">
    <property type="pathway name" value="FCERI mediated MAPK activation"/>
</dbReference>
<dbReference type="Reactome" id="R-HSA-450321">
    <property type="pathway name" value="JNK (c-Jun kinases) phosphorylation and activation mediated by activated human TAK1"/>
</dbReference>
<dbReference type="Reactome" id="R-HSA-450341">
    <property type="pathway name" value="Activation of the AP-1 family of transcription factors"/>
</dbReference>
<dbReference type="Reactome" id="R-HSA-9725370">
    <property type="pathway name" value="Signaling by ALK fusions and activated point mutants"/>
</dbReference>
<dbReference type="SignaLink" id="P45984"/>
<dbReference type="SIGNOR" id="P45984"/>
<dbReference type="BioGRID-ORCS" id="5601">
    <property type="hits" value="8 hits in 1191 CRISPR screens"/>
</dbReference>
<dbReference type="ChiTaRS" id="MAPK9">
    <property type="organism name" value="human"/>
</dbReference>
<dbReference type="EvolutionaryTrace" id="P45984"/>
<dbReference type="GeneWiki" id="Mitogen-activated_protein_kinase_9"/>
<dbReference type="GenomeRNAi" id="5601"/>
<dbReference type="Pharos" id="P45984">
    <property type="development level" value="Tchem"/>
</dbReference>
<dbReference type="PRO" id="PR:P45984"/>
<dbReference type="Proteomes" id="UP000005640">
    <property type="component" value="Chromosome 5"/>
</dbReference>
<dbReference type="RNAct" id="P45984">
    <property type="molecule type" value="protein"/>
</dbReference>
<dbReference type="Bgee" id="ENSG00000050748">
    <property type="expression patterns" value="Expressed in middle temporal gyrus and 214 other cell types or tissues"/>
</dbReference>
<dbReference type="ExpressionAtlas" id="P45984">
    <property type="expression patterns" value="baseline and differential"/>
</dbReference>
<dbReference type="GO" id="GO:0005737">
    <property type="term" value="C:cytoplasm"/>
    <property type="evidence" value="ECO:0000314"/>
    <property type="project" value="UniProt"/>
</dbReference>
<dbReference type="GO" id="GO:0005829">
    <property type="term" value="C:cytosol"/>
    <property type="evidence" value="ECO:0000314"/>
    <property type="project" value="HPA"/>
</dbReference>
<dbReference type="GO" id="GO:0005739">
    <property type="term" value="C:mitochondrion"/>
    <property type="evidence" value="ECO:0007669"/>
    <property type="project" value="Ensembl"/>
</dbReference>
<dbReference type="GO" id="GO:0016607">
    <property type="term" value="C:nuclear speck"/>
    <property type="evidence" value="ECO:0000314"/>
    <property type="project" value="HPA"/>
</dbReference>
<dbReference type="GO" id="GO:0005654">
    <property type="term" value="C:nucleoplasm"/>
    <property type="evidence" value="ECO:0000304"/>
    <property type="project" value="Reactome"/>
</dbReference>
<dbReference type="GO" id="GO:0005634">
    <property type="term" value="C:nucleus"/>
    <property type="evidence" value="ECO:0000318"/>
    <property type="project" value="GO_Central"/>
</dbReference>
<dbReference type="GO" id="GO:0005886">
    <property type="term" value="C:plasma membrane"/>
    <property type="evidence" value="ECO:0000314"/>
    <property type="project" value="HPA"/>
</dbReference>
<dbReference type="GO" id="GO:0098685">
    <property type="term" value="C:Schaffer collateral - CA1 synapse"/>
    <property type="evidence" value="ECO:0007669"/>
    <property type="project" value="Ensembl"/>
</dbReference>
<dbReference type="GO" id="GO:0005524">
    <property type="term" value="F:ATP binding"/>
    <property type="evidence" value="ECO:0007669"/>
    <property type="project" value="UniProtKB-KW"/>
</dbReference>
<dbReference type="GO" id="GO:0004705">
    <property type="term" value="F:JUN kinase activity"/>
    <property type="evidence" value="ECO:0000314"/>
    <property type="project" value="UniProtKB"/>
</dbReference>
<dbReference type="GO" id="GO:0106310">
    <property type="term" value="F:protein serine kinase activity"/>
    <property type="evidence" value="ECO:0007669"/>
    <property type="project" value="RHEA"/>
</dbReference>
<dbReference type="GO" id="GO:0004674">
    <property type="term" value="F:protein serine/threonine kinase activity"/>
    <property type="evidence" value="ECO:0000314"/>
    <property type="project" value="UniProtKB"/>
</dbReference>
<dbReference type="GO" id="GO:0004712">
    <property type="term" value="F:protein serine/threonine/tyrosine kinase activity"/>
    <property type="evidence" value="ECO:0007669"/>
    <property type="project" value="Ensembl"/>
</dbReference>
<dbReference type="GO" id="GO:0097190">
    <property type="term" value="P:apoptotic signaling pathway"/>
    <property type="evidence" value="ECO:0007669"/>
    <property type="project" value="Ensembl"/>
</dbReference>
<dbReference type="GO" id="GO:0034614">
    <property type="term" value="P:cellular response to reactive oxygen species"/>
    <property type="evidence" value="ECO:0000314"/>
    <property type="project" value="UniProt"/>
</dbReference>
<dbReference type="GO" id="GO:0090398">
    <property type="term" value="P:cellular senescence"/>
    <property type="evidence" value="ECO:0000304"/>
    <property type="project" value="Reactome"/>
</dbReference>
<dbReference type="GO" id="GO:0038095">
    <property type="term" value="P:Fc-epsilon receptor signaling pathway"/>
    <property type="evidence" value="ECO:0000304"/>
    <property type="project" value="Reactome"/>
</dbReference>
<dbReference type="GO" id="GO:0090594">
    <property type="term" value="P:inflammatory response to wounding"/>
    <property type="evidence" value="ECO:0000314"/>
    <property type="project" value="UniProt"/>
</dbReference>
<dbReference type="GO" id="GO:0007254">
    <property type="term" value="P:JNK cascade"/>
    <property type="evidence" value="ECO:0000314"/>
    <property type="project" value="UniProtKB"/>
</dbReference>
<dbReference type="GO" id="GO:0050804">
    <property type="term" value="P:modulation of chemical synaptic transmission"/>
    <property type="evidence" value="ECO:0007669"/>
    <property type="project" value="Ensembl"/>
</dbReference>
<dbReference type="GO" id="GO:2001235">
    <property type="term" value="P:positive regulation of apoptotic signaling pathway"/>
    <property type="evidence" value="ECO:0007669"/>
    <property type="project" value="Ensembl"/>
</dbReference>
<dbReference type="GO" id="GO:1900017">
    <property type="term" value="P:positive regulation of cytokine production involved in inflammatory response"/>
    <property type="evidence" value="ECO:0000314"/>
    <property type="project" value="UniProt"/>
</dbReference>
<dbReference type="GO" id="GO:0010628">
    <property type="term" value="P:positive regulation of gene expression"/>
    <property type="evidence" value="ECO:0000315"/>
    <property type="project" value="BHF-UCL"/>
</dbReference>
<dbReference type="GO" id="GO:0010744">
    <property type="term" value="P:positive regulation of macrophage derived foam cell differentiation"/>
    <property type="evidence" value="ECO:0000315"/>
    <property type="project" value="BHF-UCL"/>
</dbReference>
<dbReference type="GO" id="GO:0071803">
    <property type="term" value="P:positive regulation of podosome assembly"/>
    <property type="evidence" value="ECO:0007669"/>
    <property type="project" value="Ensembl"/>
</dbReference>
<dbReference type="GO" id="GO:0032436">
    <property type="term" value="P:positive regulation of proteasomal ubiquitin-dependent protein catabolic process"/>
    <property type="evidence" value="ECO:0007669"/>
    <property type="project" value="Ensembl"/>
</dbReference>
<dbReference type="GO" id="GO:0031398">
    <property type="term" value="P:positive regulation of protein ubiquitination"/>
    <property type="evidence" value="ECO:0007669"/>
    <property type="project" value="Ensembl"/>
</dbReference>
<dbReference type="GO" id="GO:0061833">
    <property type="term" value="P:protein localization to tricellular tight junction"/>
    <property type="evidence" value="ECO:0007669"/>
    <property type="project" value="Ensembl"/>
</dbReference>
<dbReference type="GO" id="GO:0006468">
    <property type="term" value="P:protein phosphorylation"/>
    <property type="evidence" value="ECO:0000315"/>
    <property type="project" value="UniProtKB"/>
</dbReference>
<dbReference type="GO" id="GO:0042752">
    <property type="term" value="P:regulation of circadian rhythm"/>
    <property type="evidence" value="ECO:0000250"/>
    <property type="project" value="UniProtKB"/>
</dbReference>
<dbReference type="GO" id="GO:0046686">
    <property type="term" value="P:response to cadmium ion"/>
    <property type="evidence" value="ECO:0007669"/>
    <property type="project" value="Ensembl"/>
</dbReference>
<dbReference type="GO" id="GO:0048511">
    <property type="term" value="P:rhythmic process"/>
    <property type="evidence" value="ECO:0007669"/>
    <property type="project" value="UniProtKB-KW"/>
</dbReference>
<dbReference type="CDD" id="cd07850">
    <property type="entry name" value="STKc_JNK"/>
    <property type="match status" value="1"/>
</dbReference>
<dbReference type="FunFam" id="1.10.510.10:FF:000009">
    <property type="entry name" value="Mitogen-activated protein kinase"/>
    <property type="match status" value="1"/>
</dbReference>
<dbReference type="FunFam" id="3.30.200.20:FF:000210">
    <property type="entry name" value="Mitogen-activated protein kinase"/>
    <property type="match status" value="1"/>
</dbReference>
<dbReference type="Gene3D" id="3.30.200.20">
    <property type="entry name" value="Phosphorylase Kinase, domain 1"/>
    <property type="match status" value="1"/>
</dbReference>
<dbReference type="Gene3D" id="1.10.510.10">
    <property type="entry name" value="Transferase(Phosphotransferase) domain 1"/>
    <property type="match status" value="1"/>
</dbReference>
<dbReference type="InterPro" id="IPR011009">
    <property type="entry name" value="Kinase-like_dom_sf"/>
</dbReference>
<dbReference type="InterPro" id="IPR050117">
    <property type="entry name" value="MAP_kinase"/>
</dbReference>
<dbReference type="InterPro" id="IPR003527">
    <property type="entry name" value="MAP_kinase_CS"/>
</dbReference>
<dbReference type="InterPro" id="IPR008351">
    <property type="entry name" value="MAPK_JNK"/>
</dbReference>
<dbReference type="InterPro" id="IPR000719">
    <property type="entry name" value="Prot_kinase_dom"/>
</dbReference>
<dbReference type="InterPro" id="IPR008271">
    <property type="entry name" value="Ser/Thr_kinase_AS"/>
</dbReference>
<dbReference type="PANTHER" id="PTHR24055">
    <property type="entry name" value="MITOGEN-ACTIVATED PROTEIN KINASE"/>
    <property type="match status" value="1"/>
</dbReference>
<dbReference type="Pfam" id="PF00069">
    <property type="entry name" value="Pkinase"/>
    <property type="match status" value="1"/>
</dbReference>
<dbReference type="PRINTS" id="PR01772">
    <property type="entry name" value="JNKMAPKINASE"/>
</dbReference>
<dbReference type="SMART" id="SM00220">
    <property type="entry name" value="S_TKc"/>
    <property type="match status" value="1"/>
</dbReference>
<dbReference type="SUPFAM" id="SSF56112">
    <property type="entry name" value="Protein kinase-like (PK-like)"/>
    <property type="match status" value="1"/>
</dbReference>
<dbReference type="PROSITE" id="PS01351">
    <property type="entry name" value="MAPK"/>
    <property type="match status" value="1"/>
</dbReference>
<dbReference type="PROSITE" id="PS50011">
    <property type="entry name" value="PROTEIN_KINASE_DOM"/>
    <property type="match status" value="1"/>
</dbReference>
<dbReference type="PROSITE" id="PS00108">
    <property type="entry name" value="PROTEIN_KINASE_ST"/>
    <property type="match status" value="1"/>
</dbReference>
<keyword id="KW-0002">3D-structure</keyword>
<keyword id="KW-0025">Alternative splicing</keyword>
<keyword id="KW-0067">ATP-binding</keyword>
<keyword id="KW-0090">Biological rhythms</keyword>
<keyword id="KW-0963">Cytoplasm</keyword>
<keyword id="KW-0418">Kinase</keyword>
<keyword id="KW-0547">Nucleotide-binding</keyword>
<keyword id="KW-0539">Nucleus</keyword>
<keyword id="KW-0597">Phosphoprotein</keyword>
<keyword id="KW-1267">Proteomics identification</keyword>
<keyword id="KW-1185">Reference proteome</keyword>
<keyword id="KW-0723">Serine/threonine-protein kinase</keyword>
<keyword id="KW-0808">Transferase</keyword>
<reference key="1">
    <citation type="journal article" date="1994" name="Mol. Cell. Biol.">
        <title>Signal transduction by tumor necrosis factor mediated by JNK protein kinases.</title>
        <authorList>
            <person name="Sluss H.K."/>
            <person name="Barrett T."/>
            <person name="Derijard B."/>
            <person name="Davis R.J."/>
        </authorList>
    </citation>
    <scope>NUCLEOTIDE SEQUENCE [MRNA]</scope>
    <scope>CATALYTIC ACTIVITY</scope>
</reference>
<reference key="2">
    <citation type="journal article" date="1994" name="Genes Dev.">
        <title>JNK2 contains a specificity-determining region responsible for efficient c-Jun binding and phosphorylation.</title>
        <authorList>
            <person name="Kallunki T."/>
            <person name="Su B."/>
            <person name="Tsigelny I."/>
            <person name="Sluss H.K."/>
            <person name="Derijard B."/>
            <person name="Moore G."/>
            <person name="Davis R."/>
            <person name="Karin M."/>
        </authorList>
    </citation>
    <scope>NUCLEOTIDE SEQUENCE [MRNA]</scope>
    <scope>CATALYTIC ACTIVITY</scope>
</reference>
<reference key="3">
    <citation type="journal article" date="1996" name="EMBO J.">
        <title>Selective interaction of JNK protein kinase isoforms with transcription factors.</title>
        <authorList>
            <person name="Gupta S."/>
            <person name="Barrett T."/>
            <person name="Whitmarsh A.J."/>
            <person name="Cavanagh J."/>
            <person name="Sluss H.K."/>
            <person name="Derijard B."/>
            <person name="Davis R.J."/>
        </authorList>
    </citation>
    <scope>NUCLEOTIDE SEQUENCE [MRNA]</scope>
    <scope>ALTERNATIVE SPLICING</scope>
    <scope>CATALYTIC ACTIVITY</scope>
    <source>
        <tissue>Brain</tissue>
    </source>
</reference>
<reference key="4">
    <citation type="journal article" date="2010" name="BMB Rep.">
        <title>Molecular cloning and characterization of novel human JNK2 (MAPK9) transcript variants that show different stimulation activities on AP-1.</title>
        <authorList>
            <person name="Wang P."/>
            <person name="Xiong Y."/>
            <person name="Ma C."/>
            <person name="Shi T."/>
            <person name="Ma D."/>
        </authorList>
    </citation>
    <scope>NUCLEOTIDE SEQUENCE [MRNA] (ISOFORM 5)</scope>
    <scope>CATALYTIC ACTIVITY</scope>
</reference>
<reference key="5">
    <citation type="submission" date="2004-06" db="EMBL/GenBank/DDBJ databases">
        <title>Cloning of human full open reading frames in Gateway(TM) system entry vector (pDONR201).</title>
        <authorList>
            <person name="Halleck A."/>
            <person name="Ebert L."/>
            <person name="Mkoundinya M."/>
            <person name="Schick M."/>
            <person name="Eisenstein S."/>
            <person name="Neubert P."/>
            <person name="Kstrang K."/>
            <person name="Schatten R."/>
            <person name="Shen B."/>
            <person name="Henze S."/>
            <person name="Mar W."/>
            <person name="Korn B."/>
            <person name="Zuo D."/>
            <person name="Hu Y."/>
            <person name="LaBaer J."/>
        </authorList>
    </citation>
    <scope>NUCLEOTIDE SEQUENCE [LARGE SCALE MRNA]</scope>
</reference>
<reference key="6">
    <citation type="journal article" date="2004" name="Nat. Genet.">
        <title>Complete sequencing and characterization of 21,243 full-length human cDNAs.</title>
        <authorList>
            <person name="Ota T."/>
            <person name="Suzuki Y."/>
            <person name="Nishikawa T."/>
            <person name="Otsuki T."/>
            <person name="Sugiyama T."/>
            <person name="Irie R."/>
            <person name="Wakamatsu A."/>
            <person name="Hayashi K."/>
            <person name="Sato H."/>
            <person name="Nagai K."/>
            <person name="Kimura K."/>
            <person name="Makita H."/>
            <person name="Sekine M."/>
            <person name="Obayashi M."/>
            <person name="Nishi T."/>
            <person name="Shibahara T."/>
            <person name="Tanaka T."/>
            <person name="Ishii S."/>
            <person name="Yamamoto J."/>
            <person name="Saito K."/>
            <person name="Kawai Y."/>
            <person name="Isono Y."/>
            <person name="Nakamura Y."/>
            <person name="Nagahari K."/>
            <person name="Murakami K."/>
            <person name="Yasuda T."/>
            <person name="Iwayanagi T."/>
            <person name="Wagatsuma M."/>
            <person name="Shiratori A."/>
            <person name="Sudo H."/>
            <person name="Hosoiri T."/>
            <person name="Kaku Y."/>
            <person name="Kodaira H."/>
            <person name="Kondo H."/>
            <person name="Sugawara M."/>
            <person name="Takahashi M."/>
            <person name="Kanda K."/>
            <person name="Yokoi T."/>
            <person name="Furuya T."/>
            <person name="Kikkawa E."/>
            <person name="Omura Y."/>
            <person name="Abe K."/>
            <person name="Kamihara K."/>
            <person name="Katsuta N."/>
            <person name="Sato K."/>
            <person name="Tanikawa M."/>
            <person name="Yamazaki M."/>
            <person name="Ninomiya K."/>
            <person name="Ishibashi T."/>
            <person name="Yamashita H."/>
            <person name="Murakawa K."/>
            <person name="Fujimori K."/>
            <person name="Tanai H."/>
            <person name="Kimata M."/>
            <person name="Watanabe M."/>
            <person name="Hiraoka S."/>
            <person name="Chiba Y."/>
            <person name="Ishida S."/>
            <person name="Ono Y."/>
            <person name="Takiguchi S."/>
            <person name="Watanabe S."/>
            <person name="Yosida M."/>
            <person name="Hotuta T."/>
            <person name="Kusano J."/>
            <person name="Kanehori K."/>
            <person name="Takahashi-Fujii A."/>
            <person name="Hara H."/>
            <person name="Tanase T.-O."/>
            <person name="Nomura Y."/>
            <person name="Togiya S."/>
            <person name="Komai F."/>
            <person name="Hara R."/>
            <person name="Takeuchi K."/>
            <person name="Arita M."/>
            <person name="Imose N."/>
            <person name="Musashino K."/>
            <person name="Yuuki H."/>
            <person name="Oshima A."/>
            <person name="Sasaki N."/>
            <person name="Aotsuka S."/>
            <person name="Yoshikawa Y."/>
            <person name="Matsunawa H."/>
            <person name="Ichihara T."/>
            <person name="Shiohata N."/>
            <person name="Sano S."/>
            <person name="Moriya S."/>
            <person name="Momiyama H."/>
            <person name="Satoh N."/>
            <person name="Takami S."/>
            <person name="Terashima Y."/>
            <person name="Suzuki O."/>
            <person name="Nakagawa S."/>
            <person name="Senoh A."/>
            <person name="Mizoguchi H."/>
            <person name="Goto Y."/>
            <person name="Shimizu F."/>
            <person name="Wakebe H."/>
            <person name="Hishigaki H."/>
            <person name="Watanabe T."/>
            <person name="Sugiyama A."/>
            <person name="Takemoto M."/>
            <person name="Kawakami B."/>
            <person name="Yamazaki M."/>
            <person name="Watanabe K."/>
            <person name="Kumagai A."/>
            <person name="Itakura S."/>
            <person name="Fukuzumi Y."/>
            <person name="Fujimori Y."/>
            <person name="Komiyama M."/>
            <person name="Tashiro H."/>
            <person name="Tanigami A."/>
            <person name="Fujiwara T."/>
            <person name="Ono T."/>
            <person name="Yamada K."/>
            <person name="Fujii Y."/>
            <person name="Ozaki K."/>
            <person name="Hirao M."/>
            <person name="Ohmori Y."/>
            <person name="Kawabata A."/>
            <person name="Hikiji T."/>
            <person name="Kobatake N."/>
            <person name="Inagaki H."/>
            <person name="Ikema Y."/>
            <person name="Okamoto S."/>
            <person name="Okitani R."/>
            <person name="Kawakami T."/>
            <person name="Noguchi S."/>
            <person name="Itoh T."/>
            <person name="Shigeta K."/>
            <person name="Senba T."/>
            <person name="Matsumura K."/>
            <person name="Nakajima Y."/>
            <person name="Mizuno T."/>
            <person name="Morinaga M."/>
            <person name="Sasaki M."/>
            <person name="Togashi T."/>
            <person name="Oyama M."/>
            <person name="Hata H."/>
            <person name="Watanabe M."/>
            <person name="Komatsu T."/>
            <person name="Mizushima-Sugano J."/>
            <person name="Satoh T."/>
            <person name="Shirai Y."/>
            <person name="Takahashi Y."/>
            <person name="Nakagawa K."/>
            <person name="Okumura K."/>
            <person name="Nagase T."/>
            <person name="Nomura N."/>
            <person name="Kikuchi H."/>
            <person name="Masuho Y."/>
            <person name="Yamashita R."/>
            <person name="Nakai K."/>
            <person name="Yada T."/>
            <person name="Nakamura Y."/>
            <person name="Ohara O."/>
            <person name="Isogai T."/>
            <person name="Sugano S."/>
        </authorList>
    </citation>
    <scope>NUCLEOTIDE SEQUENCE [LARGE SCALE MRNA] (ISOFORM BETA-2)</scope>
    <source>
        <tissue>Amygdala</tissue>
    </source>
</reference>
<reference key="7">
    <citation type="submission" date="2005-05" db="EMBL/GenBank/DDBJ databases">
        <authorList>
            <consortium name="NIEHS SNPs program"/>
        </authorList>
    </citation>
    <scope>NUCLEOTIDE SEQUENCE [GENOMIC DNA]</scope>
    <scope>VARIANT ALA-268</scope>
</reference>
<reference key="8">
    <citation type="journal article" date="2008" name="Nat. Methods">
        <title>Human protein factory for converting the transcriptome into an in vitro-expressed proteome.</title>
        <authorList>
            <person name="Goshima N."/>
            <person name="Kawamura Y."/>
            <person name="Fukumoto A."/>
            <person name="Miura A."/>
            <person name="Honma R."/>
            <person name="Satoh R."/>
            <person name="Wakamatsu A."/>
            <person name="Yamamoto J."/>
            <person name="Kimura K."/>
            <person name="Nishikawa T."/>
            <person name="Andoh T."/>
            <person name="Iida Y."/>
            <person name="Ishikawa K."/>
            <person name="Ito E."/>
            <person name="Kagawa N."/>
            <person name="Kaminaga C."/>
            <person name="Kanehori K."/>
            <person name="Kawakami B."/>
            <person name="Kenmochi K."/>
            <person name="Kimura R."/>
            <person name="Kobayashi M."/>
            <person name="Kuroita T."/>
            <person name="Kuwayama H."/>
            <person name="Maruyama Y."/>
            <person name="Matsuo K."/>
            <person name="Minami K."/>
            <person name="Mitsubori M."/>
            <person name="Mori M."/>
            <person name="Morishita R."/>
            <person name="Murase A."/>
            <person name="Nishikawa A."/>
            <person name="Nishikawa S."/>
            <person name="Okamoto T."/>
            <person name="Sakagami N."/>
            <person name="Sakamoto Y."/>
            <person name="Sasaki Y."/>
            <person name="Seki T."/>
            <person name="Sono S."/>
            <person name="Sugiyama A."/>
            <person name="Sumiya T."/>
            <person name="Takayama T."/>
            <person name="Takayama Y."/>
            <person name="Takeda H."/>
            <person name="Togashi T."/>
            <person name="Yahata K."/>
            <person name="Yamada H."/>
            <person name="Yanagisawa Y."/>
            <person name="Endo Y."/>
            <person name="Imamoto F."/>
            <person name="Kisu Y."/>
            <person name="Tanaka S."/>
            <person name="Isogai T."/>
            <person name="Imai J."/>
            <person name="Watanabe S."/>
            <person name="Nomura N."/>
        </authorList>
    </citation>
    <scope>NUCLEOTIDE SEQUENCE [LARGE SCALE MRNA] (ISOFORM ALPHA-2)</scope>
</reference>
<reference key="9">
    <citation type="journal article" date="2004" name="Nature">
        <title>The DNA sequence and comparative analysis of human chromosome 5.</title>
        <authorList>
            <person name="Schmutz J."/>
            <person name="Martin J."/>
            <person name="Terry A."/>
            <person name="Couronne O."/>
            <person name="Grimwood J."/>
            <person name="Lowry S."/>
            <person name="Gordon L.A."/>
            <person name="Scott D."/>
            <person name="Xie G."/>
            <person name="Huang W."/>
            <person name="Hellsten U."/>
            <person name="Tran-Gyamfi M."/>
            <person name="She X."/>
            <person name="Prabhakar S."/>
            <person name="Aerts A."/>
            <person name="Altherr M."/>
            <person name="Bajorek E."/>
            <person name="Black S."/>
            <person name="Branscomb E."/>
            <person name="Caoile C."/>
            <person name="Challacombe J.F."/>
            <person name="Chan Y.M."/>
            <person name="Denys M."/>
            <person name="Detter J.C."/>
            <person name="Escobar J."/>
            <person name="Flowers D."/>
            <person name="Fotopulos D."/>
            <person name="Glavina T."/>
            <person name="Gomez M."/>
            <person name="Gonzales E."/>
            <person name="Goodstein D."/>
            <person name="Grigoriev I."/>
            <person name="Groza M."/>
            <person name="Hammon N."/>
            <person name="Hawkins T."/>
            <person name="Haydu L."/>
            <person name="Israni S."/>
            <person name="Jett J."/>
            <person name="Kadner K."/>
            <person name="Kimball H."/>
            <person name="Kobayashi A."/>
            <person name="Lopez F."/>
            <person name="Lou Y."/>
            <person name="Martinez D."/>
            <person name="Medina C."/>
            <person name="Morgan J."/>
            <person name="Nandkeshwar R."/>
            <person name="Noonan J.P."/>
            <person name="Pitluck S."/>
            <person name="Pollard M."/>
            <person name="Predki P."/>
            <person name="Priest J."/>
            <person name="Ramirez L."/>
            <person name="Retterer J."/>
            <person name="Rodriguez A."/>
            <person name="Rogers S."/>
            <person name="Salamov A."/>
            <person name="Salazar A."/>
            <person name="Thayer N."/>
            <person name="Tice H."/>
            <person name="Tsai M."/>
            <person name="Ustaszewska A."/>
            <person name="Vo N."/>
            <person name="Wheeler J."/>
            <person name="Wu K."/>
            <person name="Yang J."/>
            <person name="Dickson M."/>
            <person name="Cheng J.-F."/>
            <person name="Eichler E.E."/>
            <person name="Olsen A."/>
            <person name="Pennacchio L.A."/>
            <person name="Rokhsar D.S."/>
            <person name="Richardson P."/>
            <person name="Lucas S.M."/>
            <person name="Myers R.M."/>
            <person name="Rubin E.M."/>
        </authorList>
    </citation>
    <scope>NUCLEOTIDE SEQUENCE [LARGE SCALE GENOMIC DNA]</scope>
</reference>
<reference key="10">
    <citation type="submission" date="2005-09" db="EMBL/GenBank/DDBJ databases">
        <authorList>
            <person name="Mural R.J."/>
            <person name="Istrail S."/>
            <person name="Sutton G.G."/>
            <person name="Florea L."/>
            <person name="Halpern A.L."/>
            <person name="Mobarry C.M."/>
            <person name="Lippert R."/>
            <person name="Walenz B."/>
            <person name="Shatkay H."/>
            <person name="Dew I."/>
            <person name="Miller J.R."/>
            <person name="Flanigan M.J."/>
            <person name="Edwards N.J."/>
            <person name="Bolanos R."/>
            <person name="Fasulo D."/>
            <person name="Halldorsson B.V."/>
            <person name="Hannenhalli S."/>
            <person name="Turner R."/>
            <person name="Yooseph S."/>
            <person name="Lu F."/>
            <person name="Nusskern D.R."/>
            <person name="Shue B.C."/>
            <person name="Zheng X.H."/>
            <person name="Zhong F."/>
            <person name="Delcher A.L."/>
            <person name="Huson D.H."/>
            <person name="Kravitz S.A."/>
            <person name="Mouchard L."/>
            <person name="Reinert K."/>
            <person name="Remington K.A."/>
            <person name="Clark A.G."/>
            <person name="Waterman M.S."/>
            <person name="Eichler E.E."/>
            <person name="Adams M.D."/>
            <person name="Hunkapiller M.W."/>
            <person name="Myers E.W."/>
            <person name="Venter J.C."/>
        </authorList>
    </citation>
    <scope>NUCLEOTIDE SEQUENCE [LARGE SCALE GENOMIC DNA]</scope>
</reference>
<reference key="11">
    <citation type="journal article" date="2004" name="Genome Res.">
        <title>The status, quality, and expansion of the NIH full-length cDNA project: the Mammalian Gene Collection (MGC).</title>
        <authorList>
            <consortium name="The MGC Project Team"/>
        </authorList>
    </citation>
    <scope>NUCLEOTIDE SEQUENCE [LARGE SCALE MRNA]</scope>
    <source>
        <tissue>Skin</tissue>
    </source>
</reference>
<reference key="12">
    <citation type="journal article" date="1999" name="Oncogene">
        <title>Role of the ATFa/JNK2 complex in Jun activation.</title>
        <authorList>
            <person name="De Graeve F."/>
            <person name="Bahr A."/>
            <person name="Sabapathy K.T."/>
            <person name="Hauss C."/>
            <person name="Wagner E.F."/>
            <person name="Kedinger C."/>
            <person name="Chatton B."/>
        </authorList>
    </citation>
    <scope>INTERACTION WITH ATF7</scope>
    <scope>FUNCTION</scope>
</reference>
<reference key="13">
    <citation type="journal article" date="2000" name="Biochem. J.">
        <title>Synergistic activation of stress-activated protein kinase 1/c-Jun N-terminal kinase (SAPK1/JNK) isoforms by mitogen-activated protein kinase kinase 4 (MKK4) and MKK7.</title>
        <authorList>
            <person name="Fleming Y."/>
            <person name="Armstrong C.G."/>
            <person name="Morrice N."/>
            <person name="Paterson A."/>
            <person name="Goedert M."/>
            <person name="Cohen P."/>
        </authorList>
    </citation>
    <scope>PHOSPHORYLATION AT THR-183 AND TYR-185</scope>
    <scope>REGULATION BY MAP2K4 AND MAP2K7</scope>
    <scope>CATALYTIC ACTIVITY</scope>
    <scope>COFACTOR</scope>
</reference>
<reference key="14">
    <citation type="journal article" date="2005" name="Biochem. J.">
        <title>Characterization of a novel human sperm-associated antigen 9 (SPAG9) having structural homology with c-Jun N-terminal kinase-interacting protein.</title>
        <authorList>
            <person name="Jagadish N."/>
            <person name="Rana R."/>
            <person name="Selvi R."/>
            <person name="Mishra D."/>
            <person name="Garg M."/>
            <person name="Yadav S."/>
            <person name="Herr J.C."/>
            <person name="Okumura K."/>
            <person name="Hasegawa A."/>
            <person name="Koyama K."/>
            <person name="Suri A."/>
        </authorList>
    </citation>
    <scope>INTERACTION WITH SPAG9</scope>
</reference>
<reference key="15">
    <citation type="journal article" date="2005" name="Genes Dev.">
        <title>The nucleolus as a stress sensor: JNK2 inactivates the transcription factor TIF-IA and down-regulates rRNA synthesis.</title>
        <authorList>
            <person name="Mayer C."/>
            <person name="Bierhoff H."/>
            <person name="Grummt I."/>
        </authorList>
    </citation>
    <scope>FUNCTION IN PHOSPHORYLATION OF RRN3</scope>
    <scope>CATALYTIC ACTIVITY</scope>
</reference>
<reference key="16">
    <citation type="journal article" date="2007" name="Cancer Res.">
        <title>Nuclear factor of activated T3 is a negative regulator of Ras-JNK1/2-AP-1 induced cell transformation.</title>
        <authorList>
            <person name="Yao K."/>
            <person name="Cho Y.-Y."/>
            <person name="Bergen H.R. III"/>
            <person name="Madden B.J."/>
            <person name="Choi B.Y."/>
            <person name="Ma W.-Y."/>
            <person name="Bode A.M."/>
            <person name="Dong Z."/>
        </authorList>
    </citation>
    <scope>INTERACTION WITH NFATC4</scope>
    <scope>CATALYTIC ACTIVITY</scope>
</reference>
<reference key="17">
    <citation type="journal article" date="2007" name="Immunity">
        <title>The CARMA1-Bcl10 signaling complex selectively regulates JNK2 kinase in the T cell receptor-signaling pathway.</title>
        <authorList>
            <person name="Blonska M."/>
            <person name="Pappu B.P."/>
            <person name="Matsumoto R."/>
            <person name="Li H."/>
            <person name="Su B."/>
            <person name="Wang D."/>
            <person name="Lin X."/>
        </authorList>
    </citation>
    <scope>INTERACTION WITH BCL10</scope>
    <scope>CATALYTIC ACTIVITY</scope>
</reference>
<reference key="18">
    <citation type="journal article" date="2007" name="Oncogene">
        <title>Cooperation between JNK1 and JNK2 in activation of p53 apoptotic pathway.</title>
        <authorList>
            <person name="Oleinik N.V."/>
            <person name="Krupenko N.I."/>
            <person name="Krupenko S.A."/>
        </authorList>
    </citation>
    <scope>FUNCTION IN PHOSPHORYLATION OF TP53</scope>
    <scope>CATALYTIC ACTIVITY</scope>
</reference>
<reference key="19">
    <citation type="journal article" date="2009" name="Immunol. Rev.">
        <title>CARMA1-mediated NF-kappaB and JNK activation in lymphocytes.</title>
        <authorList>
            <person name="Blonska M."/>
            <person name="Lin X."/>
        </authorList>
    </citation>
    <scope>REVIEW ON FUNCTION</scope>
</reference>
<reference key="20">
    <citation type="journal article" date="2009" name="Mol. Cell. Proteomics">
        <title>Large-scale proteomics analysis of the human kinome.</title>
        <authorList>
            <person name="Oppermann F.S."/>
            <person name="Gnad F."/>
            <person name="Olsen J.V."/>
            <person name="Hornberger R."/>
            <person name="Greff Z."/>
            <person name="Keri G."/>
            <person name="Mann M."/>
            <person name="Daub H."/>
        </authorList>
    </citation>
    <scope>IDENTIFICATION BY MASS SPECTROMETRY [LARGE SCALE ANALYSIS]</scope>
</reference>
<reference key="21">
    <citation type="journal article" date="2009" name="PLoS ONE">
        <title>GSK3beta is involved in JNK2-mediated beta-catenin inhibition.</title>
        <authorList>
            <person name="Hu D."/>
            <person name="Bi X."/>
            <person name="Fang W."/>
            <person name="Han A."/>
            <person name="Yang W."/>
        </authorList>
    </citation>
    <scope>FUNCTION</scope>
    <scope>SUBCELLULAR LOCATION</scope>
    <scope>INTERACTION WITH CTNNB1</scope>
</reference>
<reference key="22">
    <citation type="journal article" date="2010" name="Am. J. Physiol.">
        <title>c-Jun NH2-terminal kinase-2 mediates osmotic stress-induced tight junction disruption in the intestinal epithelium.</title>
        <authorList>
            <person name="Samak G."/>
            <person name="Suzuki T."/>
            <person name="Bhargava A."/>
            <person name="Rao R.K."/>
        </authorList>
    </citation>
    <scope>FUNCTION</scope>
</reference>
<reference key="23">
    <citation type="journal article" date="2010" name="Cell Death Dis.">
        <title>JNK phosphorylates Yes-associated protein (YAP) to regulate apoptosis.</title>
        <authorList>
            <person name="Tomlinson V."/>
            <person name="Gudmundsdottir K."/>
            <person name="Luong P."/>
            <person name="Leung K.Y."/>
            <person name="Knebel A."/>
            <person name="Basu S."/>
        </authorList>
    </citation>
    <scope>FUNCTION IN PHOSPHORYLATION OF YAP1</scope>
    <scope>CATALYTIC ACTIVITY</scope>
</reference>
<reference key="24">
    <citation type="journal article" date="2011" name="BMC Syst. Biol.">
        <title>Initial characterization of the human central proteome.</title>
        <authorList>
            <person name="Burkard T.R."/>
            <person name="Planyavsky M."/>
            <person name="Kaupe I."/>
            <person name="Breitwieser F.P."/>
            <person name="Buerckstuemmer T."/>
            <person name="Bennett K.L."/>
            <person name="Superti-Furga G."/>
            <person name="Colinge J."/>
        </authorList>
    </citation>
    <scope>IDENTIFICATION BY MASS SPECTROMETRY [LARGE SCALE ANALYSIS]</scope>
</reference>
<reference key="25">
    <citation type="journal article" date="2012" name="EMBO Rep.">
        <title>JNK regulates the photic response of the mammalian circadian clock.</title>
        <authorList>
            <person name="Yoshitane H."/>
            <person name="Honma S."/>
            <person name="Imamura K."/>
            <person name="Nakajima H."/>
            <person name="Nishide S.Y."/>
            <person name="Ono D."/>
            <person name="Kiyota H."/>
            <person name="Shinozaki N."/>
            <person name="Matsuki H."/>
            <person name="Wada N."/>
            <person name="Doi H."/>
            <person name="Hamada T."/>
            <person name="Honma K."/>
            <person name="Fukada Y."/>
        </authorList>
    </citation>
    <scope>FUNCTION</scope>
    <scope>CATALYTIC ACTIVITY</scope>
</reference>
<reference key="26">
    <citation type="journal article" date="2021" name="Nucleic Acids Res.">
        <title>Post-translational modification of RNA m6A demethylase ALKBH5 regulates ROS-induced DNA damage response.</title>
        <authorList>
            <person name="Yu F."/>
            <person name="Wei J."/>
            <person name="Cui X."/>
            <person name="Yu C."/>
            <person name="Ni W."/>
            <person name="Bungert J."/>
            <person name="Wu L."/>
            <person name="He C."/>
            <person name="Qian Z."/>
        </authorList>
    </citation>
    <scope>FUNCTION</scope>
    <scope>CATALYTIC ACTIVITY</scope>
</reference>
<reference key="27">
    <citation type="journal article" date="2008" name="J. Mol. Biol.">
        <title>The crystal structure of JNK2 reveals conformational flexibility in the MAP kinase insert and indicates its involvement in the regulation of catalytic activity.</title>
        <authorList>
            <person name="Shaw D."/>
            <person name="Wang S.M."/>
            <person name="Villasenor A.G."/>
            <person name="Tsing S."/>
            <person name="Walter D."/>
            <person name="Browner M.F."/>
            <person name="Barnett J."/>
            <person name="Kuglstatter A."/>
        </authorList>
    </citation>
    <scope>X-RAY CRYSTALLOGRAPHY (2.14 ANGSTROMS) OF 7-362</scope>
</reference>
<reference key="28">
    <citation type="journal article" date="2007" name="Nature">
        <title>Patterns of somatic mutation in human cancer genomes.</title>
        <authorList>
            <person name="Greenman C."/>
            <person name="Stephens P."/>
            <person name="Smith R."/>
            <person name="Dalgliesh G.L."/>
            <person name="Hunter C."/>
            <person name="Bignell G."/>
            <person name="Davies H."/>
            <person name="Teague J."/>
            <person name="Butler A."/>
            <person name="Stevens C."/>
            <person name="Edkins S."/>
            <person name="O'Meara S."/>
            <person name="Vastrik I."/>
            <person name="Schmidt E.E."/>
            <person name="Avis T."/>
            <person name="Barthorpe S."/>
            <person name="Bhamra G."/>
            <person name="Buck G."/>
            <person name="Choudhury B."/>
            <person name="Clements J."/>
            <person name="Cole J."/>
            <person name="Dicks E."/>
            <person name="Forbes S."/>
            <person name="Gray K."/>
            <person name="Halliday K."/>
            <person name="Harrison R."/>
            <person name="Hills K."/>
            <person name="Hinton J."/>
            <person name="Jenkinson A."/>
            <person name="Jones D."/>
            <person name="Menzies A."/>
            <person name="Mironenko T."/>
            <person name="Perry J."/>
            <person name="Raine K."/>
            <person name="Richardson D."/>
            <person name="Shepherd R."/>
            <person name="Small A."/>
            <person name="Tofts C."/>
            <person name="Varian J."/>
            <person name="Webb T."/>
            <person name="West S."/>
            <person name="Widaa S."/>
            <person name="Yates A."/>
            <person name="Cahill D.P."/>
            <person name="Louis D.N."/>
            <person name="Goldstraw P."/>
            <person name="Nicholson A.G."/>
            <person name="Brasseur F."/>
            <person name="Looijenga L."/>
            <person name="Weber B.L."/>
            <person name="Chiew Y.-E."/>
            <person name="DeFazio A."/>
            <person name="Greaves M.F."/>
            <person name="Green A.R."/>
            <person name="Campbell P."/>
            <person name="Birney E."/>
            <person name="Easton D.F."/>
            <person name="Chenevix-Trench G."/>
            <person name="Tan M.-H."/>
            <person name="Khoo S.K."/>
            <person name="Teh B.T."/>
            <person name="Yuen S.T."/>
            <person name="Leung S.Y."/>
            <person name="Wooster R."/>
            <person name="Futreal P.A."/>
            <person name="Stratton M.R."/>
        </authorList>
    </citation>
    <scope>VARIANTS [LARGE SCALE ANALYSIS] MET-13; ASN-56; THR-246 AND ILE-366</scope>
</reference>
<reference key="29">
    <citation type="journal article" date="2017" name="Am. J. Hum. Genet.">
        <title>Mutations in MAPKBP1 cause juvenile or late-onset cilia-independent nephronophthisis.</title>
        <authorList>
            <person name="Macia M.S."/>
            <person name="Halbritter J."/>
            <person name="Delous M."/>
            <person name="Bredrup C."/>
            <person name="Gutter A."/>
            <person name="Filhol E."/>
            <person name="Mellgren A.E."/>
            <person name="Leh S."/>
            <person name="Bizet A."/>
            <person name="Braun D.A."/>
            <person name="Gee H.Y."/>
            <person name="Silbermann F."/>
            <person name="Henry C."/>
            <person name="Krug P."/>
            <person name="Bole-Feysot C."/>
            <person name="Nitschke P."/>
            <person name="Joly D."/>
            <person name="Nicoud P."/>
            <person name="Paget A."/>
            <person name="Haugland H."/>
            <person name="Brackmann D."/>
            <person name="Ahmet N."/>
            <person name="Sandford R."/>
            <person name="Cengiz N."/>
            <person name="Knappskog P.M."/>
            <person name="Boman H."/>
            <person name="Linghu B."/>
            <person name="Yang F."/>
            <person name="Oakeley E.J."/>
            <person name="Saint Mezard P."/>
            <person name="Sailer A.W."/>
            <person name="Johansson S."/>
            <person name="Roedahl E."/>
            <person name="Saunier S."/>
            <person name="Hildebrandt F."/>
            <person name="Benmerah A."/>
        </authorList>
    </citation>
    <scope>INTERACTION WITH MAPKBP1</scope>
</reference>
<reference key="30">
    <citation type="journal article" date="2017" name="Am. J. Hum. Genet.">
        <authorList>
            <person name="Macia M.S."/>
            <person name="Halbritter J."/>
            <person name="Delous M."/>
            <person name="Bredrup C."/>
            <person name="Gutter A."/>
            <person name="Filhol E."/>
            <person name="Mellgren A.E."/>
            <person name="Leh S."/>
            <person name="Bizet A."/>
            <person name="Braun D.A."/>
            <person name="Gee H.Y."/>
            <person name="Silbermann F."/>
            <person name="Henry C."/>
            <person name="Krug P."/>
            <person name="Bole-Feysot C."/>
            <person name="Nitschke P."/>
            <person name="Joly D."/>
            <person name="Nicoud P."/>
            <person name="Paget A."/>
            <person name="Haugland H."/>
            <person name="Brackmann D."/>
            <person name="Ahmet N."/>
            <person name="Sandford R."/>
            <person name="Cengiz N."/>
            <person name="Knappskog P.M."/>
            <person name="Boman H."/>
            <person name="Linghu B."/>
            <person name="Yang F."/>
            <person name="Oakeley E.J."/>
            <person name="Saint Mezard P."/>
            <person name="Sailer A.W."/>
            <person name="Johansson S."/>
            <person name="Roedahl E."/>
            <person name="Saunier S."/>
            <person name="Hildebrandt F."/>
            <person name="Benmerah A."/>
        </authorList>
    </citation>
    <scope>ERRATUM OF PUBMED:28089251</scope>
</reference>
<evidence type="ECO:0000250" key="1">
    <source>
        <dbReference type="UniProtKB" id="P49186"/>
    </source>
</evidence>
<evidence type="ECO:0000250" key="2">
    <source>
        <dbReference type="UniProtKB" id="Q9WTU6"/>
    </source>
</evidence>
<evidence type="ECO:0000255" key="3">
    <source>
        <dbReference type="PROSITE-ProRule" id="PRU00159"/>
    </source>
</evidence>
<evidence type="ECO:0000255" key="4">
    <source>
        <dbReference type="PROSITE-ProRule" id="PRU10027"/>
    </source>
</evidence>
<evidence type="ECO:0000256" key="5">
    <source>
        <dbReference type="SAM" id="MobiDB-lite"/>
    </source>
</evidence>
<evidence type="ECO:0000269" key="6">
    <source>
    </source>
</evidence>
<evidence type="ECO:0000269" key="7">
    <source>
    </source>
</evidence>
<evidence type="ECO:0000269" key="8">
    <source>
    </source>
</evidence>
<evidence type="ECO:0000269" key="9">
    <source>
    </source>
</evidence>
<evidence type="ECO:0000269" key="10">
    <source>
    </source>
</evidence>
<evidence type="ECO:0000269" key="11">
    <source>
    </source>
</evidence>
<evidence type="ECO:0000269" key="12">
    <source>
    </source>
</evidence>
<evidence type="ECO:0000269" key="13">
    <source>
    </source>
</evidence>
<evidence type="ECO:0000269" key="14">
    <source>
    </source>
</evidence>
<evidence type="ECO:0000269" key="15">
    <source>
    </source>
</evidence>
<evidence type="ECO:0000269" key="16">
    <source>
    </source>
</evidence>
<evidence type="ECO:0000269" key="17">
    <source>
    </source>
</evidence>
<evidence type="ECO:0000269" key="18">
    <source>
    </source>
</evidence>
<evidence type="ECO:0000269" key="19">
    <source>
    </source>
</evidence>
<evidence type="ECO:0000269" key="20">
    <source>
    </source>
</evidence>
<evidence type="ECO:0000269" key="21">
    <source>
    </source>
</evidence>
<evidence type="ECO:0000269" key="22">
    <source>
    </source>
</evidence>
<evidence type="ECO:0000269" key="23">
    <source ref="7"/>
</evidence>
<evidence type="ECO:0000303" key="24">
    <source>
    </source>
</evidence>
<evidence type="ECO:0000303" key="25">
    <source>
    </source>
</evidence>
<evidence type="ECO:0000303" key="26">
    <source>
    </source>
</evidence>
<evidence type="ECO:0000305" key="27"/>
<evidence type="ECO:0007829" key="28">
    <source>
        <dbReference type="PDB" id="3NPC"/>
    </source>
</evidence>
<evidence type="ECO:0007829" key="29">
    <source>
        <dbReference type="PDB" id="7CML"/>
    </source>
</evidence>
<evidence type="ECO:0007829" key="30">
    <source>
        <dbReference type="PDB" id="7N8T"/>
    </source>
</evidence>
<evidence type="ECO:0007829" key="31">
    <source>
        <dbReference type="PDB" id="8ELC"/>
    </source>
</evidence>
<comment type="function">
    <text evidence="2 6 8 11 13 14 16 17 19 25">Serine/threonine-protein kinase involved in various processes such as cell proliferation, differentiation, migration, transformation and programmed cell death (PubMed:10376527, PubMed:15805466, PubMed:17525747, PubMed:19675674, PubMed:20595622, PubMed:21364637, PubMed:22441692, PubMed:34048572). Extracellular stimuli such as pro-inflammatory cytokines or physical stress stimulate the stress-activated protein kinase/c-Jun N-terminal kinase (SAP/JNK) signaling pathway. In this cascade, two dual specificity kinases MAP2K4/MKK4 and MAP2K7/MKK7 phosphorylate and activate MAPK9/JNK2 (PubMed:10376527, PubMed:15805466, PubMed:17525747, PubMed:19675674, PubMed:20595622, PubMed:21364637, PubMed:22441692, PubMed:34048572). In turn, MAPK9/JNK2 phosphorylates a number of transcription factors, primarily components of AP-1 such as JUN and ATF2 and thus regulates AP-1 transcriptional activity (PubMed:10376527). In response to oxidative or ribotoxic stresses, inhibits rRNA synthesis by phosphorylating and inactivating the RNA polymerase 1-specific transcription initiation factor RRN3 (PubMed:15805466). Promotes stressed cell apoptosis by phosphorylating key regulatory factors including TP53 and YAP1 (PubMed:17525747, PubMed:21364637). In T-cells, MAPK8 and MAPK9 are required for polarized differentiation of T-helper cells into Th1 cells (PubMed:19290929). Upon T-cell receptor (TCR) stimulation, is activated by CARMA1, BCL10, MAP2K7 and MAP3K7/TAK1 to regulate JUN protein levels (PubMed:19290929). Plays an important role in the osmotic stress-induced epithelial tight-junctions disruption (PubMed:20595622). When activated, promotes beta-catenin/CTNNB1 degradation and inhibits the canonical Wnt signaling pathway (PubMed:19675674). Also participates in neurite growth in spiral ganglion neurons (By similarity). Phosphorylates the CLOCK-BMAL1 heterodimer and plays a role in the regulation of the circadian clock (PubMed:22441692). Phosphorylates POU5F1, which results in the inhibition of POU5F1's transcriptional activity and enhances its proteasomal degradation (By similarity). Phosphorylates ALKBH5 in response to reactive oxygen species (ROS), promoting ALKBH5 sumoylation and inactivation (PubMed:34048572).</text>
</comment>
<comment type="function">
    <text>MAPK9 isoforms display different binding patterns: alpha-1 and alpha-2 preferentially bind to JUN, whereas beta-1 and beta-2 bind to ATF2. However, there is no correlation between binding and phosphorylation, which is achieved at about the same efficiency by all isoforms. JUNB is not a substrate for JNK2 alpha-2, and JUND binds only weakly to it.</text>
</comment>
<comment type="catalytic activity">
    <reaction evidence="7 8 9 11 12 15 16 17 19 20 21 22">
        <text>L-seryl-[protein] + ATP = O-phospho-L-seryl-[protein] + ADP + H(+)</text>
        <dbReference type="Rhea" id="RHEA:17989"/>
        <dbReference type="Rhea" id="RHEA-COMP:9863"/>
        <dbReference type="Rhea" id="RHEA-COMP:11604"/>
        <dbReference type="ChEBI" id="CHEBI:15378"/>
        <dbReference type="ChEBI" id="CHEBI:29999"/>
        <dbReference type="ChEBI" id="CHEBI:30616"/>
        <dbReference type="ChEBI" id="CHEBI:83421"/>
        <dbReference type="ChEBI" id="CHEBI:456216"/>
        <dbReference type="EC" id="2.7.11.24"/>
    </reaction>
</comment>
<comment type="catalytic activity">
    <reaction evidence="7 8 9 11 12 15 16 17 20 21 22">
        <text>L-threonyl-[protein] + ATP = O-phospho-L-threonyl-[protein] + ADP + H(+)</text>
        <dbReference type="Rhea" id="RHEA:46608"/>
        <dbReference type="Rhea" id="RHEA-COMP:11060"/>
        <dbReference type="Rhea" id="RHEA-COMP:11605"/>
        <dbReference type="ChEBI" id="CHEBI:15378"/>
        <dbReference type="ChEBI" id="CHEBI:30013"/>
        <dbReference type="ChEBI" id="CHEBI:30616"/>
        <dbReference type="ChEBI" id="CHEBI:61977"/>
        <dbReference type="ChEBI" id="CHEBI:456216"/>
        <dbReference type="EC" id="2.7.11.24"/>
    </reaction>
</comment>
<comment type="cofactor">
    <cofactor evidence="7">
        <name>Mg(2+)</name>
        <dbReference type="ChEBI" id="CHEBI:18420"/>
    </cofactor>
</comment>
<comment type="activity regulation">
    <text evidence="7">Activated by threonine and tyrosine phosphorylation by either of two dual specificity kinases, MAP2K4 and MAP2K7. MAP2K4 shows a strong preference for Tyr-185 while MAP2K7 phosphorylates Tyr-183 preferentially. Inhibited by dual specificity phosphatases, such as DUSP1.</text>
</comment>
<comment type="subunit">
    <text evidence="1 2 6 9 12 13 18">Interacts with MECOM (By similarity). Interacts with DCLK2 (By similarity). Binds to at least four scaffolding proteins, MAPK8IP1/JIP-1, MAPK8IP2/JIP-2, MAPK8IP3/JIP-3/JSAP1 and SPAG9/MAPK8IP4/JIP-4. These proteins also bind other components of the JNK signaling pathway (By similarity). Interacts with NFATC4 (PubMed:17875713). Interacts with ATF7; the interaction does not phosphorylate ATF7 but acts as a docking site for ATF7-associated partners such as JUN (PubMed:10376527). Interacts with BCL10 (PubMed:17189706). Interacts with CTNNB1 and GSK3B (PubMed:19675674). Interacts with MAPKBP1 (PubMed:28089251). Interacts with POU5F1; phosphorylates POU5F1 at 'Ser-355'. Found in a complex with SH3RF1, RAC2, MAP3K7/TAK1, MAP2K7/MKK7, MAPK8IP1/JIP1 and MAPK8/JNK1 (By similarity).</text>
</comment>
<comment type="interaction">
    <interactant intactId="EBI-713568">
        <id>P45984</id>
    </interactant>
    <interactant intactId="EBI-743313">
        <id>P49407</id>
        <label>ARRB1</label>
    </interactant>
    <organismsDiffer>false</organismsDiffer>
    <experiments>9</experiments>
</comment>
<comment type="interaction">
    <interactant intactId="EBI-713568">
        <id>P45984</id>
    </interactant>
    <interactant intactId="EBI-714559">
        <id>P32121</id>
        <label>ARRB2</label>
    </interactant>
    <organismsDiffer>false</organismsDiffer>
    <experiments>9</experiments>
</comment>
<comment type="interaction">
    <interactant intactId="EBI-713568">
        <id>P45984</id>
    </interactant>
    <interactant intactId="EBI-1170906">
        <id>P15336</id>
        <label>ATF2</label>
    </interactant>
    <organismsDiffer>false</organismsDiffer>
    <experiments>9</experiments>
</comment>
<comment type="interaction">
    <interactant intactId="EBI-713568">
        <id>P45984</id>
    </interactant>
    <interactant intactId="EBI-12806802">
        <id>P0C671</id>
        <label>BNIP5</label>
    </interactant>
    <organismsDiffer>false</organismsDiffer>
    <experiments>4</experiments>
</comment>
<comment type="interaction">
    <interactant intactId="EBI-713568">
        <id>P45984</id>
    </interactant>
    <interactant intactId="EBI-10191951">
        <id>O95561</id>
        <label>C1orf105</label>
    </interactant>
    <organismsDiffer>false</organismsDiffer>
    <experiments>5</experiments>
</comment>
<comment type="interaction">
    <interactant intactId="EBI-713568">
        <id>P45984</id>
    </interactant>
    <interactant intactId="EBI-946029">
        <id>Q6P1W5</id>
        <label>C1orf94</label>
    </interactant>
    <organismsDiffer>false</organismsDiffer>
    <experiments>3</experiments>
</comment>
<comment type="interaction">
    <interactant intactId="EBI-713568">
        <id>P45984</id>
    </interactant>
    <interactant intactId="EBI-12196065">
        <id>Q8N7E2</id>
        <label>CBLL2</label>
    </interactant>
    <organismsDiffer>false</organismsDiffer>
    <experiments>3</experiments>
</comment>
<comment type="interaction">
    <interactant intactId="EBI-713568">
        <id>P45984</id>
    </interactant>
    <interactant intactId="EBI-994830">
        <id>Q13042</id>
        <label>CDC16</label>
    </interactant>
    <organismsDiffer>false</organismsDiffer>
    <experiments>3</experiments>
</comment>
<comment type="interaction">
    <interactant intactId="EBI-713568">
        <id>P45984</id>
    </interactant>
    <interactant intactId="EBI-744115">
        <id>Q9C0F1</id>
        <label>CEP44</label>
    </interactant>
    <organismsDiffer>false</organismsDiffer>
    <experiments>9</experiments>
</comment>
<comment type="interaction">
    <interactant intactId="EBI-713568">
        <id>P45984</id>
    </interactant>
    <interactant intactId="EBI-10171858">
        <id>Q13363-2</id>
        <label>CTBP1</label>
    </interactant>
    <organismsDiffer>false</organismsDiffer>
    <experiments>3</experiments>
</comment>
<comment type="interaction">
    <interactant intactId="EBI-713568">
        <id>P45984</id>
    </interactant>
    <interactant intactId="EBI-14148644">
        <id>O43602-2</id>
        <label>DCX</label>
    </interactant>
    <organismsDiffer>false</organismsDiffer>
    <experiments>3</experiments>
</comment>
<comment type="interaction">
    <interactant intactId="EBI-713568">
        <id>P45984</id>
    </interactant>
    <interactant intactId="EBI-2340258">
        <id>Q8N9I9</id>
        <label>DTX3</label>
    </interactant>
    <organismsDiffer>false</organismsDiffer>
    <experiments>3</experiments>
</comment>
<comment type="interaction">
    <interactant intactId="EBI-713568">
        <id>P45984</id>
    </interactant>
    <interactant intactId="EBI-3443946">
        <id>Q9Y6W6</id>
        <label>DUSP10</label>
    </interactant>
    <organismsDiffer>false</organismsDiffer>
    <experiments>5</experiments>
</comment>
<comment type="interaction">
    <interactant intactId="EBI-713568">
        <id>P45984</id>
    </interactant>
    <interactant intactId="EBI-3443956">
        <id>Q9BY84</id>
        <label>DUSP16</label>
    </interactant>
    <organismsDiffer>false</organismsDiffer>
    <experiments>8</experiments>
</comment>
<comment type="interaction">
    <interactant intactId="EBI-713568">
        <id>P45984</id>
    </interactant>
    <interactant intactId="EBI-6591081">
        <id>Q13115</id>
        <label>DUSP4</label>
    </interactant>
    <organismsDiffer>false</organismsDiffer>
    <experiments>4</experiments>
</comment>
<comment type="interaction">
    <interactant intactId="EBI-713568">
        <id>P45984</id>
    </interactant>
    <interactant intactId="EBI-2349927">
        <id>Q5JST6</id>
        <label>EFHC2</label>
    </interactant>
    <organismsDiffer>false</organismsDiffer>
    <experiments>7</experiments>
</comment>
<comment type="interaction">
    <interactant intactId="EBI-713568">
        <id>P45984</id>
    </interactant>
    <interactant intactId="EBI-744099">
        <id>Q9H0I2</id>
        <label>ENKD1</label>
    </interactant>
    <organismsDiffer>false</organismsDiffer>
    <experiments>3</experiments>
</comment>
<comment type="interaction">
    <interactant intactId="EBI-713568">
        <id>P45984</id>
    </interactant>
    <interactant intactId="EBI-744302">
        <id>P14136</id>
        <label>GFAP</label>
    </interactant>
    <organismsDiffer>false</organismsDiffer>
    <experiments>3</experiments>
</comment>
<comment type="interaction">
    <interactant intactId="EBI-713568">
        <id>P45984</id>
    </interactant>
    <interactant intactId="EBI-11163335">
        <id>Q9NYA3</id>
        <label>GOLGA6A</label>
    </interactant>
    <organismsDiffer>false</organismsDiffer>
    <experiments>3</experiments>
</comment>
<comment type="interaction">
    <interactant intactId="EBI-713568">
        <id>P45984</id>
    </interactant>
    <interactant intactId="EBI-19954058">
        <id>O15499</id>
        <label>GSC2</label>
    </interactant>
    <organismsDiffer>false</organismsDiffer>
    <experiments>3</experiments>
</comment>
<comment type="interaction">
    <interactant intactId="EBI-713568">
        <id>P45984</id>
    </interactant>
    <interactant intactId="EBI-8638439">
        <id>Q8IYA8</id>
        <label>IHO1</label>
    </interactant>
    <organismsDiffer>false</organismsDiffer>
    <experiments>3</experiments>
</comment>
<comment type="interaction">
    <interactant intactId="EBI-713568">
        <id>P45984</id>
    </interactant>
    <interactant intactId="EBI-712105">
        <id>Q13352</id>
        <label>ITGB3BP</label>
    </interactant>
    <organismsDiffer>false</organismsDiffer>
    <experiments>3</experiments>
</comment>
<comment type="interaction">
    <interactant intactId="EBI-713568">
        <id>P45984</id>
    </interactant>
    <interactant intactId="EBI-11959635">
        <id>Q9P2G9-2</id>
        <label>KLHL8</label>
    </interactant>
    <organismsDiffer>false</organismsDiffer>
    <experiments>3</experiments>
</comment>
<comment type="interaction">
    <interactant intactId="EBI-713568">
        <id>P45984</id>
    </interactant>
    <interactant intactId="EBI-358297">
        <id>O00505</id>
        <label>KPNA3</label>
    </interactant>
    <organismsDiffer>false</organismsDiffer>
    <experiments>3</experiments>
</comment>
<comment type="interaction">
    <interactant intactId="EBI-713568">
        <id>P45984</id>
    </interactant>
    <interactant intactId="EBI-2686809">
        <id>Q96JM7</id>
        <label>L3MBTL3</label>
    </interactant>
    <organismsDiffer>false</organismsDiffer>
    <experiments>3</experiments>
</comment>
<comment type="interaction">
    <interactant intactId="EBI-713568">
        <id>P45984</id>
    </interactant>
    <interactant intactId="EBI-11985629">
        <id>Q96JM7-2</id>
        <label>L3MBTL3</label>
    </interactant>
    <organismsDiffer>false</organismsDiffer>
    <experiments>3</experiments>
</comment>
<comment type="interaction">
    <interactant intactId="EBI-713568">
        <id>P45984</id>
    </interactant>
    <interactant intactId="EBI-12039345">
        <id>Q9UBR4-2</id>
        <label>LHX3</label>
    </interactant>
    <organismsDiffer>false</organismsDiffer>
    <experiments>3</experiments>
</comment>
<comment type="interaction">
    <interactant intactId="EBI-713568">
        <id>P45984</id>
    </interactant>
    <interactant intactId="EBI-739832">
        <id>Q8TBB1</id>
        <label>LNX1</label>
    </interactant>
    <organismsDiffer>false</organismsDiffer>
    <experiments>7</experiments>
</comment>
<comment type="interaction">
    <interactant intactId="EBI-713568">
        <id>P45984</id>
    </interactant>
    <interactant intactId="EBI-2340947">
        <id>Q8N448</id>
        <label>LNX2</label>
    </interactant>
    <organismsDiffer>false</organismsDiffer>
    <experiments>3</experiments>
</comment>
<comment type="interaction">
    <interactant intactId="EBI-713568">
        <id>P45984</id>
    </interactant>
    <interactant intactId="EBI-1216080">
        <id>Q9Y250</id>
        <label>LZTS1</label>
    </interactant>
    <organismsDiffer>false</organismsDiffer>
    <experiments>3</experiments>
</comment>
<comment type="interaction">
    <interactant intactId="EBI-713568">
        <id>P45984</id>
    </interactant>
    <interactant intactId="EBI-286483">
        <id>P45983</id>
        <label>MAPK8</label>
    </interactant>
    <organismsDiffer>false</organismsDiffer>
    <experiments>5</experiments>
</comment>
<comment type="interaction">
    <interactant intactId="EBI-713568">
        <id>P45984</id>
    </interactant>
    <interactant intactId="EBI-348259">
        <id>Q96EZ8</id>
        <label>MCRS1</label>
    </interactant>
    <organismsDiffer>false</organismsDiffer>
    <experiments>3</experiments>
</comment>
<comment type="interaction">
    <interactant intactId="EBI-713568">
        <id>P45984</id>
    </interactant>
    <interactant intactId="EBI-3957138">
        <id>Q86YW9</id>
        <label>MED12L</label>
    </interactant>
    <organismsDiffer>false</organismsDiffer>
    <experiments>3</experiments>
</comment>
<comment type="interaction">
    <interactant intactId="EBI-713568">
        <id>P45984</id>
    </interactant>
    <interactant intactId="EBI-2864512">
        <id>P50221</id>
        <label>MEOX1</label>
    </interactant>
    <organismsDiffer>false</organismsDiffer>
    <experiments>7</experiments>
</comment>
<comment type="interaction">
    <interactant intactId="EBI-713568">
        <id>P45984</id>
    </interactant>
    <interactant intactId="EBI-12320785">
        <id>Q5VWP3-2</id>
        <label>MLIP</label>
    </interactant>
    <organismsDiffer>false</organismsDiffer>
    <experiments>5</experiments>
</comment>
<comment type="interaction">
    <interactant intactId="EBI-713568">
        <id>P45984</id>
    </interactant>
    <interactant intactId="EBI-2859639">
        <id>Q5HYW2</id>
        <label>NHSL2</label>
    </interactant>
    <organismsDiffer>false</organismsDiffer>
    <experiments>5</experiments>
</comment>
<comment type="interaction">
    <interactant intactId="EBI-713568">
        <id>P45984</id>
    </interactant>
    <interactant intactId="EBI-296331">
        <id>Q02548</id>
        <label>PAX5</label>
    </interactant>
    <organismsDiffer>false</organismsDiffer>
    <experiments>3</experiments>
</comment>
<comment type="interaction">
    <interactant intactId="EBI-713568">
        <id>P45984</id>
    </interactant>
    <interactant intactId="EBI-10302990">
        <id>Q9BYU1</id>
        <label>PBX4</label>
    </interactant>
    <organismsDiffer>false</organismsDiffer>
    <experiments>3</experiments>
</comment>
<comment type="interaction">
    <interactant intactId="EBI-713568">
        <id>P45984</id>
    </interactant>
    <interactant intactId="EBI-79165">
        <id>Q9NRD5</id>
        <label>PICK1</label>
    </interactant>
    <organismsDiffer>false</organismsDiffer>
    <experiments>3</experiments>
</comment>
<comment type="interaction">
    <interactant intactId="EBI-713568">
        <id>P45984</id>
    </interactant>
    <interactant intactId="EBI-12029004">
        <id>P78424</id>
        <label>POU6F2</label>
    </interactant>
    <organismsDiffer>false</organismsDiffer>
    <experiments>3</experiments>
</comment>
<comment type="interaction">
    <interactant intactId="EBI-713568">
        <id>P45984</id>
    </interactant>
    <interactant intactId="EBI-781384">
        <id>P37231</id>
        <label>PPARG</label>
    </interactant>
    <organismsDiffer>false</organismsDiffer>
    <experiments>3</experiments>
</comment>
<comment type="interaction">
    <interactant intactId="EBI-713568">
        <id>P45984</id>
    </interactant>
    <interactant intactId="EBI-3919507">
        <id>Q96S79</id>
        <label>RASL10B</label>
    </interactant>
    <organismsDiffer>false</organismsDiffer>
    <experiments>4</experiments>
</comment>
<comment type="interaction">
    <interactant intactId="EBI-713568">
        <id>P45984</id>
    </interactant>
    <interactant intactId="EBI-12821217">
        <id>Q2I0M5</id>
        <label>RSPO4</label>
    </interactant>
    <organismsDiffer>false</organismsDiffer>
    <experiments>3</experiments>
</comment>
<comment type="interaction">
    <interactant intactId="EBI-713568">
        <id>P45984</id>
    </interactant>
    <interactant intactId="EBI-3957636">
        <id>Q8IYX7</id>
        <label>SAXO1</label>
    </interactant>
    <organismsDiffer>false</organismsDiffer>
    <experiments>3</experiments>
</comment>
<comment type="interaction">
    <interactant intactId="EBI-713568">
        <id>P45984</id>
    </interactant>
    <interactant intactId="EBI-727004">
        <id>O00560</id>
        <label>SDCBP</label>
    </interactant>
    <organismsDiffer>false</organismsDiffer>
    <experiments>3</experiments>
</comment>
<comment type="interaction">
    <interactant intactId="EBI-713568">
        <id>P45984</id>
    </interactant>
    <interactant intactId="EBI-348469">
        <id>Q15427</id>
        <label>SF3B4</label>
    </interactant>
    <organismsDiffer>false</organismsDiffer>
    <experiments>7</experiments>
</comment>
<comment type="interaction">
    <interactant intactId="EBI-713568">
        <id>P45984</id>
    </interactant>
    <interactant intactId="EBI-715117">
        <id>P34896</id>
        <label>SHMT1</label>
    </interactant>
    <organismsDiffer>false</organismsDiffer>
    <experiments>7</experiments>
</comment>
<comment type="interaction">
    <interactant intactId="EBI-713568">
        <id>P45984</id>
    </interactant>
    <interactant intactId="EBI-10173195">
        <id>A2RU48</id>
        <label>SMCO3</label>
    </interactant>
    <organismsDiffer>false</organismsDiffer>
    <experiments>6</experiments>
</comment>
<comment type="interaction">
    <interactant intactId="EBI-713568">
        <id>P45984</id>
    </interactant>
    <interactant intactId="EBI-518675">
        <id>P40763</id>
        <label>STAT3</label>
    </interactant>
    <organismsDiffer>false</organismsDiffer>
    <experiments>2</experiments>
</comment>
<comment type="interaction">
    <interactant intactId="EBI-713568">
        <id>P45984</id>
    </interactant>
    <interactant intactId="EBI-3923210">
        <id>Q8TDR4</id>
        <label>TCP10L</label>
    </interactant>
    <organismsDiffer>false</organismsDiffer>
    <experiments>3</experiments>
</comment>
<comment type="interaction">
    <interactant intactId="EBI-713568">
        <id>P45984</id>
    </interactant>
    <interactant intactId="EBI-742397">
        <id>Q8IYF3</id>
        <label>TEX11</label>
    </interactant>
    <organismsDiffer>false</organismsDiffer>
    <experiments>3</experiments>
</comment>
<comment type="interaction">
    <interactant intactId="EBI-713568">
        <id>P45984</id>
    </interactant>
    <interactant intactId="EBI-11523345">
        <id>Q8IYF3-3</id>
        <label>TEX11</label>
    </interactant>
    <organismsDiffer>false</organismsDiffer>
    <experiments>3</experiments>
</comment>
<comment type="interaction">
    <interactant intactId="EBI-713568">
        <id>P45984</id>
    </interactant>
    <interactant intactId="EBI-714790">
        <id>O43379</id>
        <label>WDR62</label>
    </interactant>
    <organismsDiffer>false</organismsDiffer>
    <experiments>5</experiments>
</comment>
<comment type="interaction">
    <interactant intactId="EBI-713568">
        <id>P45984</id>
    </interactant>
    <interactant intactId="EBI-14104088">
        <id>Q53FD0-2</id>
        <label>ZC2HC1C</label>
    </interactant>
    <organismsDiffer>false</organismsDiffer>
    <experiments>3</experiments>
</comment>
<comment type="interaction">
    <interactant intactId="EBI-713568">
        <id>P45984</id>
    </interactant>
    <interactant intactId="EBI-10746567">
        <id>P52744</id>
        <label>ZNF138</label>
    </interactant>
    <organismsDiffer>false</organismsDiffer>
    <experiments>3</experiments>
</comment>
<comment type="interaction">
    <interactant intactId="EBI-713568">
        <id>P45984</id>
    </interactant>
    <interactant intactId="EBI-746605">
        <id>Q9BR84</id>
        <label>ZNF559</label>
    </interactant>
    <organismsDiffer>false</organismsDiffer>
    <experiments>3</experiments>
</comment>
<comment type="interaction">
    <interactant intactId="EBI-713568">
        <id>P45984</id>
    </interactant>
    <interactant intactId="EBI-347522">
        <id>O43257</id>
        <label>ZNHIT1</label>
    </interactant>
    <organismsDiffer>false</organismsDiffer>
    <experiments>3</experiments>
</comment>
<comment type="interaction">
    <interactant intactId="EBI-713586">
        <id>P45984-1</id>
    </interactant>
    <interactant intactId="EBI-518675">
        <id>P40763</id>
        <label>STAT3</label>
    </interactant>
    <organismsDiffer>false</organismsDiffer>
    <experiments>3</experiments>
</comment>
<comment type="subcellular location">
    <subcellularLocation>
        <location evidence="13">Cytoplasm</location>
    </subcellularLocation>
    <subcellularLocation>
        <location evidence="13">Nucleus</location>
    </subcellularLocation>
    <text evidence="2">Colocalizes with POU5F1 in the nucleus.</text>
</comment>
<comment type="alternative products">
    <event type="alternative splicing"/>
    <isoform>
        <id>P45984-1</id>
        <name>Alpha-2</name>
        <sequence type="displayed"/>
    </isoform>
    <isoform>
        <id>P45984-2</id>
        <name>Alpha-1</name>
        <sequence type="described" ref="VSP_004835"/>
    </isoform>
    <isoform>
        <id>P45984-3</id>
        <name>Beta-1</name>
        <sequence type="described" ref="VSP_004834 VSP_004835"/>
    </isoform>
    <isoform>
        <id>P45984-4</id>
        <name>Beta-2</name>
        <sequence type="described" ref="VSP_004834"/>
    </isoform>
    <isoform>
        <id>P45984-5</id>
        <name>5</name>
        <sequence type="described" ref="VSP_041908 VSP_041909"/>
    </isoform>
</comment>
<comment type="domain">
    <text>The TXY motif contains the threonine and tyrosine residues whose phosphorylation activates the MAP kinases.</text>
</comment>
<comment type="PTM">
    <text evidence="7">Dually phosphorylated on Thr-183 and Tyr-185 by MAP2K7 and MAP2K4, which activates the enzyme. Autophosphorylated in vitro.</text>
</comment>
<comment type="similarity">
    <text evidence="27">Belongs to the protein kinase superfamily. CMGC Ser/Thr protein kinase family. MAP kinase subfamily.</text>
</comment>
<comment type="online information" name="Atlas of Genetics and Cytogenetics in Oncology and Haematology">
    <link uri="https://atlasgeneticsoncology.org/gene/426/JNK2"/>
</comment>
<sequence>MSDSKCDSQFYSVQVADSTFTVLKRYQQLKPIGSGAQGIVCAAFDTVLGINVAVKKLSRPFQNQTHAKRAYRELVLLKCVNHKNIISLLNVFTPQKTLEEFQDVYLVMELMDANLCQVIHMELDHERMSYLLYQMLCGIKHLHSAGIIHRDLKPSNIVVKSDCTLKILDFGLARTACTNFMMTPYVVTRYYRAPEVILGMGYKENVDIWSVGCIMGELVKGCVIFQGTDHIDQWNKVIEQLGTPSAEFMKKLQPTVRNYVENRPKYPGIKFEELFPDWIFPSESERDKIKTSQARDLLSKMLVIDPDKRISVDEALRHPYITVWYDPAEAEAPPPQIYDAQLEEREHAIEEWKELIYKEVMDWEERSKNGVVKDQPSDAAVSSNATPSQSSSINDISSMSTEQTLASDTDSSLDASTGPLEGCR</sequence>
<organism>
    <name type="scientific">Homo sapiens</name>
    <name type="common">Human</name>
    <dbReference type="NCBI Taxonomy" id="9606"/>
    <lineage>
        <taxon>Eukaryota</taxon>
        <taxon>Metazoa</taxon>
        <taxon>Chordata</taxon>
        <taxon>Craniata</taxon>
        <taxon>Vertebrata</taxon>
        <taxon>Euteleostomi</taxon>
        <taxon>Mammalia</taxon>
        <taxon>Eutheria</taxon>
        <taxon>Euarchontoglires</taxon>
        <taxon>Primates</taxon>
        <taxon>Haplorrhini</taxon>
        <taxon>Catarrhini</taxon>
        <taxon>Hominidae</taxon>
        <taxon>Homo</taxon>
    </lineage>
</organism>
<proteinExistence type="evidence at protein level"/>
<name>MK09_HUMAN</name>
<gene>
    <name type="primary">MAPK9</name>
    <name type="synonym">JNK2</name>
    <name type="synonym">PRKM9</name>
    <name type="synonym">SAPK1A</name>
</gene>
<feature type="chain" id="PRO_0000186273" description="Mitogen-activated protein kinase 9">
    <location>
        <begin position="1"/>
        <end position="424"/>
    </location>
</feature>
<feature type="domain" description="Protein kinase" evidence="3">
    <location>
        <begin position="26"/>
        <end position="321"/>
    </location>
</feature>
<feature type="region of interest" description="Disordered" evidence="5">
    <location>
        <begin position="368"/>
        <end position="424"/>
    </location>
</feature>
<feature type="short sequence motif" description="TXY">
    <location>
        <begin position="183"/>
        <end position="185"/>
    </location>
</feature>
<feature type="compositionally biased region" description="Low complexity" evidence="5">
    <location>
        <begin position="388"/>
        <end position="417"/>
    </location>
</feature>
<feature type="active site" description="Proton acceptor" evidence="3 4">
    <location>
        <position position="151"/>
    </location>
</feature>
<feature type="binding site" evidence="3">
    <location>
        <begin position="32"/>
        <end position="40"/>
    </location>
    <ligand>
        <name>ATP</name>
        <dbReference type="ChEBI" id="CHEBI:30616"/>
    </ligand>
</feature>
<feature type="binding site" evidence="3">
    <location>
        <position position="55"/>
    </location>
    <ligand>
        <name>ATP</name>
        <dbReference type="ChEBI" id="CHEBI:30616"/>
    </ligand>
</feature>
<feature type="modified residue" description="Phosphothreonine; by MAP2K7" evidence="7">
    <location>
        <position position="183"/>
    </location>
</feature>
<feature type="modified residue" description="Phosphotyrosine; by MAP2K4" evidence="7">
    <location>
        <position position="185"/>
    </location>
</feature>
<feature type="splice variant" id="VSP_004834" description="In isoform Beta-1 and isoform Beta-2." evidence="24">
    <original>GELVKGCVIFQGTDH</original>
    <variation>AEMVLHKVLFPGRDY</variation>
    <location>
        <begin position="216"/>
        <end position="230"/>
    </location>
</feature>
<feature type="splice variant" id="VSP_041908" description="In isoform 5." evidence="26">
    <original>HIDQWNKVIEQLG</original>
    <variation>RILPRDLGPAMLS</variation>
    <location>
        <begin position="230"/>
        <end position="242"/>
    </location>
</feature>
<feature type="splice variant" id="VSP_041909" description="In isoform 5." evidence="26">
    <location>
        <begin position="243"/>
        <end position="424"/>
    </location>
</feature>
<feature type="splice variant" id="VSP_004835" description="In isoform Alpha-1 and isoform Beta-1." evidence="27">
    <original>DAAVSSNATPSQSSSINDISSMSTEQTLASDTDSSLDASTGPLEGCR</original>
    <variation>AQMQQ</variation>
    <location>
        <begin position="378"/>
        <end position="424"/>
    </location>
</feature>
<feature type="sequence variant" id="VAR_042260" description="In a colorectal adenocarcinoma sample; somatic mutation; dbSNP:rs1762231480." evidence="10">
    <original>V</original>
    <variation>M</variation>
    <location>
        <position position="13"/>
    </location>
</feature>
<feature type="sequence variant" id="VAR_042261" description="In a head &amp; Neck squamous cell carcinoma sample; somatic mutation." evidence="10">
    <original>K</original>
    <variation>N</variation>
    <location>
        <position position="56"/>
    </location>
</feature>
<feature type="sequence variant" id="VAR_042262" description="In dbSNP:rs35421153." evidence="10">
    <original>A</original>
    <variation>T</variation>
    <location>
        <position position="246"/>
    </location>
</feature>
<feature type="sequence variant" id="VAR_025175" description="In dbSNP:rs35693958." evidence="23">
    <original>G</original>
    <variation>A</variation>
    <location>
        <position position="268"/>
    </location>
</feature>
<feature type="sequence variant" id="VAR_042263" description="In dbSNP:rs55736180." evidence="10">
    <original>R</original>
    <variation>I</variation>
    <location>
        <position position="366"/>
    </location>
</feature>
<feature type="sequence conflict" description="In Ref. 1; AAA56831 and 3; AAC50606/AAC50608/AAC50609." evidence="27" ref="1 3">
    <original>N</original>
    <variation>S</variation>
    <location>
        <position position="51"/>
    </location>
</feature>
<feature type="sequence conflict" description="In Ref. 2; AAA74740." evidence="27" ref="2">
    <original>S</original>
    <variation>P</variation>
    <location>
        <position position="377"/>
    </location>
</feature>
<feature type="turn" evidence="29">
    <location>
        <begin position="6"/>
        <end position="8"/>
    </location>
</feature>
<feature type="strand" evidence="30">
    <location>
        <begin position="11"/>
        <end position="23"/>
    </location>
</feature>
<feature type="strand" evidence="30">
    <location>
        <begin position="26"/>
        <end position="35"/>
    </location>
</feature>
<feature type="strand" evidence="30">
    <location>
        <begin position="38"/>
        <end position="45"/>
    </location>
</feature>
<feature type="turn" evidence="30">
    <location>
        <begin position="46"/>
        <end position="49"/>
    </location>
</feature>
<feature type="strand" evidence="30">
    <location>
        <begin position="50"/>
        <end position="59"/>
    </location>
</feature>
<feature type="turn" evidence="31">
    <location>
        <begin position="60"/>
        <end position="62"/>
    </location>
</feature>
<feature type="helix" evidence="30">
    <location>
        <begin position="64"/>
        <end position="79"/>
    </location>
</feature>
<feature type="strand" evidence="30">
    <location>
        <begin position="88"/>
        <end position="92"/>
    </location>
</feature>
<feature type="turn" evidence="30">
    <location>
        <begin position="98"/>
        <end position="100"/>
    </location>
</feature>
<feature type="strand" evidence="30">
    <location>
        <begin position="103"/>
        <end position="109"/>
    </location>
</feature>
<feature type="strand" evidence="30">
    <location>
        <begin position="112"/>
        <end position="114"/>
    </location>
</feature>
<feature type="helix" evidence="30">
    <location>
        <begin position="115"/>
        <end position="118"/>
    </location>
</feature>
<feature type="helix" evidence="31">
    <location>
        <begin position="119"/>
        <end position="121"/>
    </location>
</feature>
<feature type="helix" evidence="30">
    <location>
        <begin position="125"/>
        <end position="144"/>
    </location>
</feature>
<feature type="helix" evidence="30">
    <location>
        <begin position="154"/>
        <end position="156"/>
    </location>
</feature>
<feature type="strand" evidence="30">
    <location>
        <begin position="157"/>
        <end position="159"/>
    </location>
</feature>
<feature type="strand" evidence="30">
    <location>
        <begin position="165"/>
        <end position="167"/>
    </location>
</feature>
<feature type="turn" evidence="28">
    <location>
        <begin position="176"/>
        <end position="178"/>
    </location>
</feature>
<feature type="strand" evidence="30">
    <location>
        <begin position="179"/>
        <end position="181"/>
    </location>
</feature>
<feature type="helix" evidence="29">
    <location>
        <begin position="189"/>
        <end position="191"/>
    </location>
</feature>
<feature type="helix" evidence="30">
    <location>
        <begin position="194"/>
        <end position="197"/>
    </location>
</feature>
<feature type="helix" evidence="30">
    <location>
        <begin position="206"/>
        <end position="220"/>
    </location>
</feature>
<feature type="helix" evidence="30">
    <location>
        <begin position="230"/>
        <end position="241"/>
    </location>
</feature>
<feature type="helix" evidence="30">
    <location>
        <begin position="246"/>
        <end position="250"/>
    </location>
</feature>
<feature type="helix" evidence="30">
    <location>
        <begin position="254"/>
        <end position="262"/>
    </location>
</feature>
<feature type="helix" evidence="30">
    <location>
        <begin position="271"/>
        <end position="274"/>
    </location>
</feature>
<feature type="helix" evidence="30">
    <location>
        <begin position="277"/>
        <end position="279"/>
    </location>
</feature>
<feature type="helix" evidence="30">
    <location>
        <begin position="285"/>
        <end position="301"/>
    </location>
</feature>
<feature type="turn" evidence="30">
    <location>
        <begin position="306"/>
        <end position="308"/>
    </location>
</feature>
<feature type="helix" evidence="30">
    <location>
        <begin position="312"/>
        <end position="316"/>
    </location>
</feature>
<feature type="helix" evidence="30">
    <location>
        <begin position="319"/>
        <end position="322"/>
    </location>
</feature>
<feature type="helix" evidence="31">
    <location>
        <begin position="327"/>
        <end position="330"/>
    </location>
</feature>
<feature type="strand" evidence="30">
    <location>
        <begin position="342"/>
        <end position="344"/>
    </location>
</feature>
<feature type="helix" evidence="30">
    <location>
        <begin position="349"/>
        <end position="361"/>
    </location>
</feature>
<protein>
    <recommendedName>
        <fullName>Mitogen-activated protein kinase 9</fullName>
        <shortName>MAP kinase 9</shortName>
        <shortName>MAPK 9</shortName>
        <ecNumber evidence="7 8 12 15 20 21 22">2.7.11.24</ecNumber>
    </recommendedName>
    <alternativeName>
        <fullName>JNK-55</fullName>
    </alternativeName>
    <alternativeName>
        <fullName>Stress-activated protein kinase 1a</fullName>
        <shortName>SAPK1a</shortName>
    </alternativeName>
    <alternativeName>
        <fullName>Stress-activated protein kinase JNK2</fullName>
    </alternativeName>
    <alternativeName>
        <fullName>c-Jun N-terminal kinase 2</fullName>
    </alternativeName>
</protein>
<accession>P45984</accession>
<accession>A8K0S3</accession>
<accession>B5BU66</accession>
<accession>B5M0B4</accession>
<accession>D3DWQ8</accession>
<accession>D3DWQ9</accession>
<accession>Q15708</accession>
<accession>Q15710</accession>
<accession>Q15711</accession>
<accession>Q8N5C5</accession>